<dbReference type="EMBL" id="AF190862">
    <property type="protein sequence ID" value="AAF05707.1"/>
    <property type="molecule type" value="mRNA"/>
</dbReference>
<dbReference type="EMBL" id="AF218584">
    <property type="protein sequence ID" value="AAF42847.1"/>
    <property type="molecule type" value="mRNA"/>
</dbReference>
<dbReference type="EMBL" id="AF233521">
    <property type="protein sequence ID" value="AAF35393.1"/>
    <property type="molecule type" value="mRNA"/>
</dbReference>
<dbReference type="EMBL" id="CR456493">
    <property type="protein sequence ID" value="CAG30379.1"/>
    <property type="molecule type" value="mRNA"/>
</dbReference>
<dbReference type="EMBL" id="AK075256">
    <property type="protein sequence ID" value="BAC11501.1"/>
    <property type="molecule type" value="mRNA"/>
</dbReference>
<dbReference type="EMBL" id="AK122898">
    <property type="protein sequence ID" value="BAG53788.1"/>
    <property type="molecule type" value="mRNA"/>
</dbReference>
<dbReference type="EMBL" id="AK290548">
    <property type="protein sequence ID" value="BAF83237.1"/>
    <property type="molecule type" value="mRNA"/>
</dbReference>
<dbReference type="EMBL" id="AL035496">
    <property type="status" value="NOT_ANNOTATED_CDS"/>
    <property type="molecule type" value="Genomic_DNA"/>
</dbReference>
<dbReference type="EMBL" id="Z83844">
    <property type="status" value="NOT_ANNOTATED_CDS"/>
    <property type="molecule type" value="Genomic_DNA"/>
</dbReference>
<dbReference type="EMBL" id="CH471095">
    <property type="protein sequence ID" value="EAW60169.1"/>
    <property type="molecule type" value="Genomic_DNA"/>
</dbReference>
<dbReference type="EMBL" id="BC000538">
    <property type="protein sequence ID" value="AAH00538.2"/>
    <property type="molecule type" value="mRNA"/>
</dbReference>
<dbReference type="EMBL" id="BC010917">
    <property type="protein sequence ID" value="AAH10917.1"/>
    <property type="molecule type" value="mRNA"/>
</dbReference>
<dbReference type="EMBL" id="BC029388">
    <property type="protein sequence ID" value="AAH29388.1"/>
    <property type="molecule type" value="mRNA"/>
</dbReference>
<dbReference type="EMBL" id="BC044629">
    <property type="protein sequence ID" value="AAH44629.1"/>
    <property type="molecule type" value="mRNA"/>
</dbReference>
<dbReference type="EMBL" id="AL110219">
    <property type="protein sequence ID" value="CAB53679.1"/>
    <property type="molecule type" value="mRNA"/>
</dbReference>
<dbReference type="CCDS" id="CCDS13951.1">
    <molecule id="Q9UJY5-1"/>
</dbReference>
<dbReference type="CCDS" id="CCDS33643.1">
    <molecule id="Q9UJY5-4"/>
</dbReference>
<dbReference type="CCDS" id="CCDS54526.1">
    <molecule id="Q9UJY5-3"/>
</dbReference>
<dbReference type="CCDS" id="CCDS87022.1">
    <molecule id="Q9UJY5-6"/>
</dbReference>
<dbReference type="PIR" id="T14759">
    <property type="entry name" value="T14759"/>
</dbReference>
<dbReference type="RefSeq" id="NP_001001560.1">
    <molecule id="Q9UJY5-4"/>
    <property type="nucleotide sequence ID" value="NM_001001560.3"/>
</dbReference>
<dbReference type="RefSeq" id="NP_001166158.1">
    <property type="nucleotide sequence ID" value="NM_001172687.1"/>
</dbReference>
<dbReference type="RefSeq" id="NP_001166159.1">
    <molecule id="Q9UJY5-3"/>
    <property type="nucleotide sequence ID" value="NM_001172688.2"/>
</dbReference>
<dbReference type="RefSeq" id="NP_001350700.1">
    <molecule id="Q9UJY5-6"/>
    <property type="nucleotide sequence ID" value="NM_001363771.2"/>
</dbReference>
<dbReference type="RefSeq" id="NP_037497.1">
    <molecule id="Q9UJY5-1"/>
    <property type="nucleotide sequence ID" value="NM_013365.5"/>
</dbReference>
<dbReference type="RefSeq" id="XP_005261574.1">
    <property type="nucleotide sequence ID" value="XM_005261517.3"/>
</dbReference>
<dbReference type="RefSeq" id="XP_005261577.1">
    <property type="nucleotide sequence ID" value="XM_005261520.1"/>
</dbReference>
<dbReference type="RefSeq" id="XP_006724292.1">
    <molecule id="Q9UJY5-3"/>
    <property type="nucleotide sequence ID" value="XM_006724229.2"/>
</dbReference>
<dbReference type="RefSeq" id="XP_011528424.1">
    <property type="nucleotide sequence ID" value="XM_011530122.1"/>
</dbReference>
<dbReference type="RefSeq" id="XP_016884249.1">
    <property type="nucleotide sequence ID" value="XM_017028760.1"/>
</dbReference>
<dbReference type="RefSeq" id="XP_016884250.1">
    <property type="nucleotide sequence ID" value="XM_017028761.1"/>
</dbReference>
<dbReference type="RefSeq" id="XP_016884251.1">
    <property type="nucleotide sequence ID" value="XM_017028762.1"/>
</dbReference>
<dbReference type="RefSeq" id="XP_024307983.1">
    <molecule id="Q9UJY5-3"/>
    <property type="nucleotide sequence ID" value="XM_024452215.2"/>
</dbReference>
<dbReference type="RefSeq" id="XP_024307984.1">
    <molecule id="Q9UJY5-3"/>
    <property type="nucleotide sequence ID" value="XM_024452216.2"/>
</dbReference>
<dbReference type="RefSeq" id="XP_047297280.1">
    <molecule id="Q9UJY5-3"/>
    <property type="nucleotide sequence ID" value="XM_047441324.1"/>
</dbReference>
<dbReference type="RefSeq" id="XP_047297281.1">
    <molecule id="Q9UJY5-3"/>
    <property type="nucleotide sequence ID" value="XM_047441325.1"/>
</dbReference>
<dbReference type="RefSeq" id="XP_047297282.1">
    <molecule id="Q9UJY5-3"/>
    <property type="nucleotide sequence ID" value="XM_047441326.1"/>
</dbReference>
<dbReference type="PDB" id="1J2J">
    <property type="method" value="X-ray"/>
    <property type="resolution" value="1.60 A"/>
    <property type="chains" value="B=166-210"/>
</dbReference>
<dbReference type="PDB" id="1JWF">
    <property type="method" value="X-ray"/>
    <property type="resolution" value="2.10 A"/>
    <property type="chains" value="A=1-147"/>
</dbReference>
<dbReference type="PDB" id="1JWG">
    <property type="method" value="X-ray"/>
    <property type="resolution" value="2.00 A"/>
    <property type="chains" value="A/B=1-147"/>
</dbReference>
<dbReference type="PDB" id="1NA8">
    <property type="method" value="X-ray"/>
    <property type="resolution" value="2.30 A"/>
    <property type="chains" value="A/B=494-639"/>
</dbReference>
<dbReference type="PDB" id="1NAF">
    <property type="method" value="X-ray"/>
    <property type="resolution" value="2.80 A"/>
    <property type="chains" value="A=165-314"/>
</dbReference>
<dbReference type="PDB" id="1NWM">
    <property type="method" value="X-ray"/>
    <property type="resolution" value="2.40 A"/>
    <property type="chains" value="X=166-302"/>
</dbReference>
<dbReference type="PDB" id="1O3X">
    <property type="method" value="X-ray"/>
    <property type="resolution" value="2.10 A"/>
    <property type="chains" value="A=166-305"/>
</dbReference>
<dbReference type="PDB" id="1OM9">
    <property type="method" value="X-ray"/>
    <property type="resolution" value="2.50 A"/>
    <property type="chains" value="A/B=494-639"/>
</dbReference>
<dbReference type="PDB" id="1OXZ">
    <property type="method" value="X-ray"/>
    <property type="resolution" value="2.80 A"/>
    <property type="chains" value="A=141-326"/>
</dbReference>
<dbReference type="PDB" id="1PY1">
    <property type="method" value="X-ray"/>
    <property type="resolution" value="2.60 A"/>
    <property type="chains" value="A/B/C/D=2-157"/>
</dbReference>
<dbReference type="PDB" id="1UJJ">
    <property type="method" value="X-ray"/>
    <property type="resolution" value="2.60 A"/>
    <property type="chains" value="A/B=1-147"/>
</dbReference>
<dbReference type="PDB" id="1UJK">
    <property type="method" value="X-ray"/>
    <property type="resolution" value="1.90 A"/>
    <property type="chains" value="A/B=1-147"/>
</dbReference>
<dbReference type="PDB" id="1X79">
    <property type="method" value="X-ray"/>
    <property type="resolution" value="2.41 A"/>
    <property type="chains" value="A=210-302"/>
</dbReference>
<dbReference type="PDB" id="2DWX">
    <property type="method" value="X-ray"/>
    <property type="resolution" value="2.55 A"/>
    <property type="chains" value="A/B/C/D=507-639, P/Q=376-388"/>
</dbReference>
<dbReference type="PDB" id="2DWY">
    <property type="method" value="X-ray"/>
    <property type="resolution" value="2.30 A"/>
    <property type="chains" value="A/B/C/D=507-639"/>
</dbReference>
<dbReference type="PDB" id="3G2S">
    <property type="method" value="X-ray"/>
    <property type="resolution" value="1.70 A"/>
    <property type="chains" value="A/B=1-147"/>
</dbReference>
<dbReference type="PDB" id="3G2T">
    <property type="method" value="X-ray"/>
    <property type="resolution" value="2.00 A"/>
    <property type="chains" value="A/B=1-147"/>
</dbReference>
<dbReference type="PDB" id="3G2U">
    <property type="method" value="X-ray"/>
    <property type="resolution" value="2.30 A"/>
    <property type="chains" value="A/B=1-147"/>
</dbReference>
<dbReference type="PDB" id="3G2V">
    <property type="method" value="X-ray"/>
    <property type="resolution" value="2.10 A"/>
    <property type="chains" value="A/B=1-147"/>
</dbReference>
<dbReference type="PDB" id="3G2W">
    <property type="method" value="X-ray"/>
    <property type="resolution" value="2.40 A"/>
    <property type="chains" value="A/B=1-147, C/D=351-364"/>
</dbReference>
<dbReference type="PDBsum" id="1J2J"/>
<dbReference type="PDBsum" id="1JWF"/>
<dbReference type="PDBsum" id="1JWG"/>
<dbReference type="PDBsum" id="1NA8"/>
<dbReference type="PDBsum" id="1NAF"/>
<dbReference type="PDBsum" id="1NWM"/>
<dbReference type="PDBsum" id="1O3X"/>
<dbReference type="PDBsum" id="1OM9"/>
<dbReference type="PDBsum" id="1OXZ"/>
<dbReference type="PDBsum" id="1PY1"/>
<dbReference type="PDBsum" id="1UJJ"/>
<dbReference type="PDBsum" id="1UJK"/>
<dbReference type="PDBsum" id="1X79"/>
<dbReference type="PDBsum" id="2DWX"/>
<dbReference type="PDBsum" id="2DWY"/>
<dbReference type="PDBsum" id="3G2S"/>
<dbReference type="PDBsum" id="3G2T"/>
<dbReference type="PDBsum" id="3G2U"/>
<dbReference type="PDBsum" id="3G2V"/>
<dbReference type="PDBsum" id="3G2W"/>
<dbReference type="SMR" id="Q9UJY5"/>
<dbReference type="BioGRID" id="117540">
    <property type="interactions" value="128"/>
</dbReference>
<dbReference type="CORUM" id="Q9UJY5"/>
<dbReference type="ELM" id="Q9UJY5"/>
<dbReference type="FunCoup" id="Q9UJY5">
    <property type="interactions" value="2609"/>
</dbReference>
<dbReference type="IntAct" id="Q9UJY5">
    <property type="interactions" value="97"/>
</dbReference>
<dbReference type="MINT" id="Q9UJY5"/>
<dbReference type="STRING" id="9606.ENSP00000371175"/>
<dbReference type="TCDB" id="9.B.278.1.2">
    <property type="family name" value="the organellar-targeting adaptor protein complex (o-apc) family"/>
</dbReference>
<dbReference type="GlyGen" id="Q9UJY5">
    <property type="glycosylation" value="1 site, 1 O-linked glycan (1 site)"/>
</dbReference>
<dbReference type="iPTMnet" id="Q9UJY5"/>
<dbReference type="PhosphoSitePlus" id="Q9UJY5"/>
<dbReference type="BioMuta" id="GGA1"/>
<dbReference type="DMDM" id="14548066"/>
<dbReference type="jPOST" id="Q9UJY5"/>
<dbReference type="MassIVE" id="Q9UJY5"/>
<dbReference type="PaxDb" id="9606-ENSP00000341344"/>
<dbReference type="PeptideAtlas" id="Q9UJY5"/>
<dbReference type="ProteomicsDB" id="66377"/>
<dbReference type="ProteomicsDB" id="84692">
    <molecule id="Q9UJY5-1"/>
</dbReference>
<dbReference type="ProteomicsDB" id="84693">
    <molecule id="Q9UJY5-2"/>
</dbReference>
<dbReference type="ProteomicsDB" id="84694">
    <molecule id="Q9UJY5-3"/>
</dbReference>
<dbReference type="ProteomicsDB" id="84695">
    <molecule id="Q9UJY5-4"/>
</dbReference>
<dbReference type="ProteomicsDB" id="84696">
    <molecule id="Q9UJY5-5"/>
</dbReference>
<dbReference type="Pumba" id="Q9UJY5"/>
<dbReference type="Antibodypedia" id="12029">
    <property type="antibodies" value="235 antibodies from 29 providers"/>
</dbReference>
<dbReference type="DNASU" id="26088"/>
<dbReference type="Ensembl" id="ENST00000325180.12">
    <molecule id="Q9UJY5-4"/>
    <property type="protein sequence ID" value="ENSP00000321288.8"/>
    <property type="gene ID" value="ENSG00000100083.20"/>
</dbReference>
<dbReference type="Ensembl" id="ENST00000343632.9">
    <molecule id="Q9UJY5-1"/>
    <property type="protein sequence ID" value="ENSP00000341344.4"/>
    <property type="gene ID" value="ENSG00000100083.20"/>
</dbReference>
<dbReference type="Ensembl" id="ENST00000381756.9">
    <molecule id="Q9UJY5-6"/>
    <property type="protein sequence ID" value="ENSP00000371175.5"/>
    <property type="gene ID" value="ENSG00000100083.20"/>
</dbReference>
<dbReference type="Ensembl" id="ENST00000406772.5">
    <molecule id="Q9UJY5-3"/>
    <property type="protein sequence ID" value="ENSP00000385287.1"/>
    <property type="gene ID" value="ENSG00000100083.20"/>
</dbReference>
<dbReference type="Ensembl" id="ENST00000715689.1">
    <molecule id="Q9UJY5-1"/>
    <property type="protein sequence ID" value="ENSP00000520500.1"/>
    <property type="gene ID" value="ENSG00000100083.20"/>
</dbReference>
<dbReference type="GeneID" id="26088"/>
<dbReference type="KEGG" id="hsa:26088"/>
<dbReference type="MANE-Select" id="ENST00000343632.9">
    <property type="protein sequence ID" value="ENSP00000341344.4"/>
    <property type="RefSeq nucleotide sequence ID" value="NM_013365.5"/>
    <property type="RefSeq protein sequence ID" value="NP_037497.1"/>
</dbReference>
<dbReference type="UCSC" id="uc003atc.4">
    <molecule id="Q9UJY5-1"/>
    <property type="organism name" value="human"/>
</dbReference>
<dbReference type="AGR" id="HGNC:17842"/>
<dbReference type="CTD" id="26088"/>
<dbReference type="DisGeNET" id="26088"/>
<dbReference type="GeneCards" id="GGA1"/>
<dbReference type="HGNC" id="HGNC:17842">
    <property type="gene designation" value="GGA1"/>
</dbReference>
<dbReference type="HPA" id="ENSG00000100083">
    <property type="expression patterns" value="Tissue enhanced (testis)"/>
</dbReference>
<dbReference type="MIM" id="606004">
    <property type="type" value="gene"/>
</dbReference>
<dbReference type="neXtProt" id="NX_Q9UJY5"/>
<dbReference type="OpenTargets" id="ENSG00000100083"/>
<dbReference type="PharmGKB" id="PA28657"/>
<dbReference type="VEuPathDB" id="HostDB:ENSG00000100083"/>
<dbReference type="eggNOG" id="KOG1086">
    <property type="taxonomic scope" value="Eukaryota"/>
</dbReference>
<dbReference type="GeneTree" id="ENSGT00940000156448"/>
<dbReference type="HOGENOM" id="CLU_015010_0_0_1"/>
<dbReference type="InParanoid" id="Q9UJY5"/>
<dbReference type="OMA" id="PDNYEPN"/>
<dbReference type="OrthoDB" id="447025at2759"/>
<dbReference type="PAN-GO" id="Q9UJY5">
    <property type="GO annotations" value="4 GO annotations based on evolutionary models"/>
</dbReference>
<dbReference type="PhylomeDB" id="Q9UJY5"/>
<dbReference type="TreeFam" id="TF318574"/>
<dbReference type="PathwayCommons" id="Q9UJY5"/>
<dbReference type="Reactome" id="R-HSA-8854214">
    <property type="pathway name" value="TBC/RABGAPs"/>
</dbReference>
<dbReference type="Reactome" id="R-HSA-977225">
    <property type="pathway name" value="Amyloid fiber formation"/>
</dbReference>
<dbReference type="SignaLink" id="Q9UJY5"/>
<dbReference type="SIGNOR" id="Q9UJY5"/>
<dbReference type="BioGRID-ORCS" id="26088">
    <property type="hits" value="9 hits in 1150 CRISPR screens"/>
</dbReference>
<dbReference type="ChiTaRS" id="GGA1">
    <property type="organism name" value="human"/>
</dbReference>
<dbReference type="EvolutionaryTrace" id="Q9UJY5"/>
<dbReference type="GeneWiki" id="GGA1"/>
<dbReference type="GenomeRNAi" id="26088"/>
<dbReference type="Pharos" id="Q9UJY5">
    <property type="development level" value="Tbio"/>
</dbReference>
<dbReference type="PRO" id="PR:Q9UJY5"/>
<dbReference type="Proteomes" id="UP000005640">
    <property type="component" value="Chromosome 22"/>
</dbReference>
<dbReference type="RNAct" id="Q9UJY5">
    <property type="molecule type" value="protein"/>
</dbReference>
<dbReference type="Bgee" id="ENSG00000100083">
    <property type="expression patterns" value="Expressed in pancreatic ductal cell and 195 other cell types or tissues"/>
</dbReference>
<dbReference type="ExpressionAtlas" id="Q9UJY5">
    <property type="expression patterns" value="baseline and differential"/>
</dbReference>
<dbReference type="GO" id="GO:0005829">
    <property type="term" value="C:cytosol"/>
    <property type="evidence" value="ECO:0007669"/>
    <property type="project" value="GOC"/>
</dbReference>
<dbReference type="GO" id="GO:0005769">
    <property type="term" value="C:early endosome"/>
    <property type="evidence" value="ECO:0000314"/>
    <property type="project" value="UniProtKB"/>
</dbReference>
<dbReference type="GO" id="GO:0031901">
    <property type="term" value="C:early endosome membrane"/>
    <property type="evidence" value="ECO:0000304"/>
    <property type="project" value="Reactome"/>
</dbReference>
<dbReference type="GO" id="GO:0010008">
    <property type="term" value="C:endosome membrane"/>
    <property type="evidence" value="ECO:0000304"/>
    <property type="project" value="Reactome"/>
</dbReference>
<dbReference type="GO" id="GO:0005794">
    <property type="term" value="C:Golgi apparatus"/>
    <property type="evidence" value="ECO:0000314"/>
    <property type="project" value="HPA"/>
</dbReference>
<dbReference type="GO" id="GO:0043231">
    <property type="term" value="C:intracellular membrane-bounded organelle"/>
    <property type="evidence" value="ECO:0000314"/>
    <property type="project" value="HPA"/>
</dbReference>
<dbReference type="GO" id="GO:0016020">
    <property type="term" value="C:membrane"/>
    <property type="evidence" value="ECO:0007005"/>
    <property type="project" value="UniProtKB"/>
</dbReference>
<dbReference type="GO" id="GO:0005654">
    <property type="term" value="C:nucleoplasm"/>
    <property type="evidence" value="ECO:0000314"/>
    <property type="project" value="HPA"/>
</dbReference>
<dbReference type="GO" id="GO:0032991">
    <property type="term" value="C:protein-containing complex"/>
    <property type="evidence" value="ECO:0000315"/>
    <property type="project" value="CAFA"/>
</dbReference>
<dbReference type="GO" id="GO:0005802">
    <property type="term" value="C:trans-Golgi network"/>
    <property type="evidence" value="ECO:0000318"/>
    <property type="project" value="GO_Central"/>
</dbReference>
<dbReference type="GO" id="GO:0035091">
    <property type="term" value="F:phosphatidylinositol binding"/>
    <property type="evidence" value="ECO:0007669"/>
    <property type="project" value="InterPro"/>
</dbReference>
<dbReference type="GO" id="GO:0031267">
    <property type="term" value="F:small GTPase binding"/>
    <property type="evidence" value="ECO:0000353"/>
    <property type="project" value="CAFA"/>
</dbReference>
<dbReference type="GO" id="GO:0043130">
    <property type="term" value="F:ubiquitin binding"/>
    <property type="evidence" value="ECO:0007669"/>
    <property type="project" value="InterPro"/>
</dbReference>
<dbReference type="GO" id="GO:0043001">
    <property type="term" value="P:Golgi to plasma membrane protein transport"/>
    <property type="evidence" value="ECO:0000314"/>
    <property type="project" value="UniProtKB"/>
</dbReference>
<dbReference type="GO" id="GO:0006893">
    <property type="term" value="P:Golgi to plasma membrane transport"/>
    <property type="evidence" value="ECO:0000318"/>
    <property type="project" value="GO_Central"/>
</dbReference>
<dbReference type="GO" id="GO:0006886">
    <property type="term" value="P:intracellular protein transport"/>
    <property type="evidence" value="ECO:0000314"/>
    <property type="project" value="UniProtKB"/>
</dbReference>
<dbReference type="GO" id="GO:0045732">
    <property type="term" value="P:positive regulation of protein catabolic process"/>
    <property type="evidence" value="ECO:0007669"/>
    <property type="project" value="Ensembl"/>
</dbReference>
<dbReference type="GO" id="GO:0030163">
    <property type="term" value="P:protein catabolic process"/>
    <property type="evidence" value="ECO:0007669"/>
    <property type="project" value="Ensembl"/>
</dbReference>
<dbReference type="GO" id="GO:0008104">
    <property type="term" value="P:protein localization"/>
    <property type="evidence" value="ECO:0000314"/>
    <property type="project" value="UniProtKB"/>
</dbReference>
<dbReference type="GO" id="GO:0034394">
    <property type="term" value="P:protein localization to cell surface"/>
    <property type="evidence" value="ECO:0000314"/>
    <property type="project" value="UniProtKB"/>
</dbReference>
<dbReference type="GO" id="GO:1903441">
    <property type="term" value="P:protein localization to ciliary membrane"/>
    <property type="evidence" value="ECO:0007669"/>
    <property type="project" value="Ensembl"/>
</dbReference>
<dbReference type="GO" id="GO:0042147">
    <property type="term" value="P:retrograde transport, endosome to Golgi"/>
    <property type="evidence" value="ECO:0000314"/>
    <property type="project" value="UniProtKB"/>
</dbReference>
<dbReference type="CDD" id="cd14239">
    <property type="entry name" value="GAT_GGA1_GGA2"/>
    <property type="match status" value="1"/>
</dbReference>
<dbReference type="CDD" id="cd17009">
    <property type="entry name" value="VHS_GGA1"/>
    <property type="match status" value="1"/>
</dbReference>
<dbReference type="DisProt" id="DP00314"/>
<dbReference type="FunFam" id="2.60.40.1230:FF:000001">
    <property type="entry name" value="ADP-ribosylation factor-binding protein GGA1 isoform 1"/>
    <property type="match status" value="1"/>
</dbReference>
<dbReference type="FunFam" id="1.20.5.170:FF:000023">
    <property type="entry name" value="ADP-ribosylation factor-binding protein GGA3 isoform X1"/>
    <property type="match status" value="1"/>
</dbReference>
<dbReference type="FunFam" id="1.25.40.90:FF:000011">
    <property type="entry name" value="ADP-ribosylation factor-binding protein GGA3 isoform X1"/>
    <property type="match status" value="1"/>
</dbReference>
<dbReference type="FunFam" id="1.20.58.160:FF:000002">
    <property type="entry name" value="Golgi-associated, gamma adaptin ear containing, ARF binding protein 2"/>
    <property type="match status" value="1"/>
</dbReference>
<dbReference type="Gene3D" id="1.20.5.170">
    <property type="match status" value="1"/>
</dbReference>
<dbReference type="Gene3D" id="1.20.58.160">
    <property type="match status" value="1"/>
</dbReference>
<dbReference type="Gene3D" id="1.25.40.90">
    <property type="match status" value="1"/>
</dbReference>
<dbReference type="Gene3D" id="2.60.40.1230">
    <property type="match status" value="1"/>
</dbReference>
<dbReference type="InterPro" id="IPR008152">
    <property type="entry name" value="Clathrin_a/b/g-adaptin_app_Ig"/>
</dbReference>
<dbReference type="InterPro" id="IPR013041">
    <property type="entry name" value="Clathrin_app_Ig-like_sf"/>
</dbReference>
<dbReference type="InterPro" id="IPR008942">
    <property type="entry name" value="ENTH_VHS"/>
</dbReference>
<dbReference type="InterPro" id="IPR008153">
    <property type="entry name" value="GAE_dom"/>
</dbReference>
<dbReference type="InterPro" id="IPR004152">
    <property type="entry name" value="GAT_dom"/>
</dbReference>
<dbReference type="InterPro" id="IPR038425">
    <property type="entry name" value="GAT_sf"/>
</dbReference>
<dbReference type="InterPro" id="IPR027422">
    <property type="entry name" value="GGA1-3"/>
</dbReference>
<dbReference type="InterPro" id="IPR041198">
    <property type="entry name" value="GGA_N-GAT"/>
</dbReference>
<dbReference type="InterPro" id="IPR002014">
    <property type="entry name" value="VHS_dom"/>
</dbReference>
<dbReference type="PANTHER" id="PTHR45905:SF4">
    <property type="entry name" value="ADP-RIBOSYLATION FACTOR-BINDING PROTEIN GGA1"/>
    <property type="match status" value="1"/>
</dbReference>
<dbReference type="PANTHER" id="PTHR45905">
    <property type="entry name" value="GOLGI-LOCALIZED, GAMMA-ADAPTIN EAR CONTAINING, ARF BINDING PROTEIN"/>
    <property type="match status" value="1"/>
</dbReference>
<dbReference type="Pfam" id="PF02883">
    <property type="entry name" value="Alpha_adaptinC2"/>
    <property type="match status" value="1"/>
</dbReference>
<dbReference type="Pfam" id="PF03127">
    <property type="entry name" value="GAT"/>
    <property type="match status" value="1"/>
</dbReference>
<dbReference type="Pfam" id="PF18308">
    <property type="entry name" value="GGA_N-GAT"/>
    <property type="match status" value="1"/>
</dbReference>
<dbReference type="Pfam" id="PF00790">
    <property type="entry name" value="VHS"/>
    <property type="match status" value="1"/>
</dbReference>
<dbReference type="SMART" id="SM00809">
    <property type="entry name" value="Alpha_adaptinC2"/>
    <property type="match status" value="1"/>
</dbReference>
<dbReference type="SMART" id="SM00288">
    <property type="entry name" value="VHS"/>
    <property type="match status" value="1"/>
</dbReference>
<dbReference type="SUPFAM" id="SSF49348">
    <property type="entry name" value="Clathrin adaptor appendage domain"/>
    <property type="match status" value="1"/>
</dbReference>
<dbReference type="SUPFAM" id="SSF48464">
    <property type="entry name" value="ENTH/VHS domain"/>
    <property type="match status" value="1"/>
</dbReference>
<dbReference type="SUPFAM" id="SSF89009">
    <property type="entry name" value="GAT-like domain"/>
    <property type="match status" value="1"/>
</dbReference>
<dbReference type="PROSITE" id="PS50180">
    <property type="entry name" value="GAE"/>
    <property type="match status" value="1"/>
</dbReference>
<dbReference type="PROSITE" id="PS50909">
    <property type="entry name" value="GAT"/>
    <property type="match status" value="1"/>
</dbReference>
<dbReference type="PROSITE" id="PS50179">
    <property type="entry name" value="VHS"/>
    <property type="match status" value="1"/>
</dbReference>
<comment type="function">
    <text evidence="2 8 24 26 32">Plays a role in protein sorting and trafficking between the trans-Golgi network (TGN) and endosomes. Mediates the ARF-dependent recruitment of clathrin to the TGN and binds ubiquitinated proteins and membrane cargo molecules with a cytosolic acidic cluster-dileucine (DXXLL) motif (PubMed:11301005, PubMed:15886016). Mediates export of the GPCR receptor ADRA2B to the cell surface (PubMed:27901063). Required for targeting PKD1:PKD2 complex from the trans-Golgi network to the cilium membrane (By similarity). Regulates retrograde transport of proteins such as phosphorylated form of BACE1 from endosomes to the trans-Golgi network (PubMed:15615712, PubMed:15886016).</text>
</comment>
<comment type="subunit">
    <text evidence="2 7 8 9 10 11 12 13 14 15 16 17 18 19 20 21 22 23 25 26 28 29 30 31 32 36">Monomer (Probable). Interacts with GGA2 and GGA3 (PubMed:14638859). Binds to clathrin and activated ARFs, including ARF1, ARF5 and ARF6 (PubMed:11301005, PubMed:11950392, PubMed:12679809, PubMed:15143060, PubMed:22522702). Interacts with RABEP1 (PubMed:12505986, PubMed:14665628, PubMed:15143060). Interacts with RABGEF1 (PubMed:12505986, PubMed:15143060). Interacts with the type-I membrane proteins LRP3, M6PR/CD-MPR and IGF2R/CI-MPR (PubMed:11387475, PubMed:11390366, PubMed:12060753). Interacts (via N-terminal VHS domain) with SORL1/sorLA and SORT1 (via C-terminal cytosolic domain) (PubMed:11821067, PubMed:17855360, PubMed:20015111). Interacts with EPN4 (PubMed:12538641). Interacts with CCDC91 (PubMed:12808037, PubMed:12858163). Interacts with HEATR5B/p200a (PubMed:12808037, PubMed:15758025). Interacts with SYNRG/gamma-synergin (PubMed:10814529, PubMed:12808037, PubMed:15758025). Interacts (via GAE doamin) with NECAP1 and NECAP2 (PubMed:14665628). Interacts (via GAE domain) with AFTPH/aftiphilin (PubMed:14665628, PubMed:15758025). Interacts with TSG101 and UBC (PubMed:14660606, PubMed:15143060). Interacts with RNF11 (PubMed:20676133). Interacts (via VHS domain) with BACE1 (via DXXLL motif); the interaction highly increases when BACE1 is phosphorylated at 'Ser-498' (PubMed:14567678, PubMed:15886016). Interacts with CNST (By similarity). Interacts with ADRA2B (PubMed:27901063). Interacts with ARL3; the interaction recruits, in collaboration with RABEP1, PKD1:PKD2 complex to trans-Golgi network and is required for ciliary targeting (By similarity).</text>
</comment>
<comment type="interaction">
    <interactant intactId="EBI-447141">
        <id>Q9UJY5</id>
    </interactant>
    <interactant intactId="EBI-2433139">
        <id>P56817</id>
        <label>BACE1</label>
    </interactant>
    <organismsDiffer>false</organismsDiffer>
    <experiments>4</experiments>
</comment>
<comment type="interaction">
    <interactant intactId="EBI-447141">
        <id>Q9UJY5</id>
    </interactant>
    <interactant intactId="EBI-747505">
        <id>Q8TAB5</id>
        <label>C1orf216</label>
    </interactant>
    <organismsDiffer>false</organismsDiffer>
    <experiments>3</experiments>
</comment>
<comment type="interaction">
    <interactant intactId="EBI-447141">
        <id>Q9UJY5</id>
    </interactant>
    <interactant intactId="EBI-349854">
        <id>P13569</id>
        <label>CFTR</label>
    </interactant>
    <organismsDiffer>false</organismsDiffer>
    <experiments>6</experiments>
</comment>
<comment type="interaction">
    <interactant intactId="EBI-447141">
        <id>Q9UJY5</id>
    </interactant>
    <interactant intactId="EBI-740402">
        <id>O60941</id>
        <label>DTNB</label>
    </interactant>
    <organismsDiffer>false</organismsDiffer>
    <experiments>4</experiments>
</comment>
<comment type="interaction">
    <interactant intactId="EBI-447141">
        <id>Q9UJY5</id>
    </interactant>
    <interactant intactId="EBI-447646">
        <id>Q9UJY4</id>
        <label>GGA2</label>
    </interactant>
    <organismsDiffer>false</organismsDiffer>
    <experiments>8</experiments>
</comment>
<comment type="interaction">
    <interactant intactId="EBI-447141">
        <id>Q9UJY5</id>
    </interactant>
    <interactant intactId="EBI-447404">
        <id>Q9NZ52</id>
        <label>GGA3</label>
    </interactant>
    <organismsDiffer>false</organismsDiffer>
    <experiments>4</experiments>
</comment>
<comment type="interaction">
    <interactant intactId="EBI-447141">
        <id>Q9UJY5</id>
    </interactant>
    <interactant intactId="EBI-2511327">
        <id>Q9NYZ3</id>
        <label>GTSE1</label>
    </interactant>
    <organismsDiffer>false</organismsDiffer>
    <experiments>2</experiments>
</comment>
<comment type="interaction">
    <interactant intactId="EBI-447141">
        <id>Q9UJY5</id>
    </interactant>
    <interactant intactId="EBI-1048580">
        <id>P11717</id>
        <label>IGF2R</label>
    </interactant>
    <organismsDiffer>false</organismsDiffer>
    <experiments>9</experiments>
</comment>
<comment type="interaction">
    <interactant intactId="EBI-447141">
        <id>Q9UJY5</id>
    </interactant>
    <interactant intactId="EBI-852823">
        <id>P05412</id>
        <label>JUN</label>
    </interactant>
    <organismsDiffer>false</organismsDiffer>
    <experiments>2</experiments>
</comment>
<comment type="interaction">
    <interactant intactId="EBI-447141">
        <id>Q9UJY5</id>
    </interactant>
    <interactant intactId="EBI-358882">
        <id>Q7Z3U7</id>
        <label>MON2</label>
    </interactant>
    <organismsDiffer>false</organismsDiffer>
    <experiments>2</experiments>
</comment>
<comment type="interaction">
    <interactant intactId="EBI-447141">
        <id>Q9UJY5</id>
    </interactant>
    <interactant intactId="EBI-350338">
        <id>P35579</id>
        <label>MYH9</label>
    </interactant>
    <organismsDiffer>false</organismsDiffer>
    <experiments>2</experiments>
</comment>
<comment type="interaction">
    <interactant intactId="EBI-447141">
        <id>Q9UJY5</id>
    </interactant>
    <interactant intactId="EBI-447043">
        <id>Q15276</id>
        <label>RABEP1</label>
    </interactant>
    <organismsDiffer>false</organismsDiffer>
    <experiments>8</experiments>
</comment>
<comment type="interaction">
    <interactant intactId="EBI-447141">
        <id>Q9UJY5</id>
    </interactant>
    <interactant intactId="EBI-396669">
        <id>Q9Y3C5</id>
        <label>RNF11</label>
    </interactant>
    <organismsDiffer>false</organismsDiffer>
    <experiments>7</experiments>
</comment>
<comment type="interaction">
    <interactant intactId="EBI-447141">
        <id>Q9UJY5</id>
    </interactant>
    <interactant intactId="EBI-1171329">
        <id>Q92673</id>
        <label>SORL1</label>
    </interactant>
    <organismsDiffer>false</organismsDiffer>
    <experiments>4</experiments>
</comment>
<comment type="interaction">
    <interactant intactId="EBI-447141">
        <id>Q9UJY5</id>
    </interactant>
    <interactant intactId="EBI-1057058">
        <id>Q99523</id>
        <label>SORT1</label>
    </interactant>
    <organismsDiffer>false</organismsDiffer>
    <experiments>2</experiments>
</comment>
<comment type="interaction">
    <interactant intactId="EBI-447141">
        <id>Q9UJY5</id>
    </interactant>
    <interactant intactId="EBI-413034">
        <id>P0CG47</id>
        <label>UBB</label>
    </interactant>
    <organismsDiffer>false</organismsDiffer>
    <experiments>3</experiments>
</comment>
<comment type="interaction">
    <interactant intactId="EBI-447141">
        <id>Q9UJY5</id>
    </interactant>
    <interactant intactId="EBI-21453893">
        <id>P19328</id>
        <label>Adra2b</label>
    </interactant>
    <organismsDiffer>true</organismsDiffer>
    <experiments>3</experiments>
</comment>
<comment type="interaction">
    <interactant intactId="EBI-447141">
        <id>Q9UJY5</id>
    </interactant>
    <interactant intactId="EBI-988682">
        <id>P62331</id>
        <label>Arf6</label>
    </interactant>
    <organismsDiffer>true</organismsDiffer>
    <experiments>2</experiments>
</comment>
<comment type="interaction">
    <interactant intactId="EBI-447141">
        <id>Q9UJY5</id>
    </interactant>
    <interactant intactId="EBI-447376">
        <id>O18973</id>
        <label>RABGEF1</label>
    </interactant>
    <organismsDiffer>true</organismsDiffer>
    <experiments>2</experiments>
</comment>
<comment type="interaction">
    <interactant intactId="EBI-12108696">
        <id>Q9UJY5-4</id>
    </interactant>
    <interactant intactId="EBI-77613">
        <id>P05067</id>
        <label>APP</label>
    </interactant>
    <organismsDiffer>false</organismsDiffer>
    <experiments>3</experiments>
</comment>
<comment type="interaction">
    <interactant intactId="EBI-12108696">
        <id>Q9UJY5-4</id>
    </interactant>
    <interactant intactId="EBI-747505">
        <id>Q8TAB5</id>
        <label>C1orf216</label>
    </interactant>
    <organismsDiffer>false</organismsDiffer>
    <experiments>3</experiments>
</comment>
<comment type="interaction">
    <interactant intactId="EBI-12108696">
        <id>Q9UJY5-4</id>
    </interactant>
    <interactant intactId="EBI-25836642">
        <id>Q8NE08</id>
        <label>COL25A1</label>
    </interactant>
    <organismsDiffer>false</organismsDiffer>
    <experiments>3</experiments>
</comment>
<comment type="interaction">
    <interactant intactId="EBI-12108696">
        <id>Q9UJY5-4</id>
    </interactant>
    <interactant intactId="EBI-742953">
        <id>Q9BY27</id>
        <label>DGCR6L</label>
    </interactant>
    <organismsDiffer>false</organismsDiffer>
    <experiments>3</experiments>
</comment>
<comment type="interaction">
    <interactant intactId="EBI-12108696">
        <id>Q9UJY5-4</id>
    </interactant>
    <interactant intactId="EBI-11984733">
        <id>O60941-5</id>
        <label>DTNB</label>
    </interactant>
    <organismsDiffer>false</organismsDiffer>
    <experiments>3</experiments>
</comment>
<comment type="interaction">
    <interactant intactId="EBI-12108696">
        <id>Q9UJY5-4</id>
    </interactant>
    <interactant intactId="EBI-488533">
        <id>Q8WYH8</id>
        <label>ING5</label>
    </interactant>
    <organismsDiffer>false</organismsDiffer>
    <experiments>3</experiments>
</comment>
<comment type="interaction">
    <interactant intactId="EBI-12108696">
        <id>Q9UJY5-4</id>
    </interactant>
    <interactant intactId="EBI-1055254">
        <id>Q8WXH2</id>
        <label>JPH3</label>
    </interactant>
    <organismsDiffer>false</organismsDiffer>
    <experiments>3</experiments>
</comment>
<comment type="interaction">
    <interactant intactId="EBI-12108696">
        <id>Q9UJY5-4</id>
    </interactant>
    <interactant intactId="EBI-14308786">
        <id>A4D0Q3</id>
        <label>KIAA1218</label>
    </interactant>
    <organismsDiffer>false</organismsDiffer>
    <experiments>3</experiments>
</comment>
<comment type="interaction">
    <interactant intactId="EBI-12108696">
        <id>Q9UJY5-4</id>
    </interactant>
    <interactant intactId="EBI-10178578">
        <id>I6L9F6</id>
        <label>NEFL</label>
    </interactant>
    <organismsDiffer>false</organismsDiffer>
    <experiments>3</experiments>
</comment>
<comment type="interaction">
    <interactant intactId="EBI-25903400">
        <id>Q9UJY5-5</id>
    </interactant>
    <interactant intactId="EBI-25832196">
        <id>Q14114-3</id>
        <label>LRP8</label>
    </interactant>
    <organismsDiffer>false</organismsDiffer>
    <experiments>3</experiments>
</comment>
<comment type="subcellular location">
    <subcellularLocation>
        <location evidence="26">Golgi apparatus</location>
        <location evidence="26">trans-Golgi network membrane</location>
        <topology>Peripheral membrane protein</topology>
    </subcellularLocation>
    <subcellularLocation>
        <location evidence="26">Endosome membrane</location>
        <topology>Peripheral membrane protein</topology>
    </subcellularLocation>
    <subcellularLocation>
        <location evidence="26">Early endosome membrane</location>
        <topology evidence="36">Peripheral membrane protein</topology>
    </subcellularLocation>
</comment>
<comment type="alternative products">
    <event type="alternative splicing"/>
    <isoform>
        <id>Q9UJY5-1</id>
        <name>1</name>
        <sequence type="displayed"/>
    </isoform>
    <isoform>
        <id>Q9UJY5-2</id>
        <name>2</name>
        <sequence type="described" ref="VSP_001744"/>
    </isoform>
    <isoform>
        <id>Q9UJY5-3</id>
        <name>3</name>
        <sequence type="described" ref="VSP_042806"/>
    </isoform>
    <isoform>
        <id>Q9UJY5-4</id>
        <name>4</name>
        <sequence type="described" ref="VSP_042809"/>
    </isoform>
    <isoform>
        <id>Q9UJY5-5</id>
        <name>5</name>
        <sequence type="described" ref="VSP_042807 VSP_042808"/>
    </isoform>
    <isoform>
        <id>Q9UJY5-6</id>
        <name>6</name>
        <sequence type="described" ref="VSP_057352"/>
    </isoform>
</comment>
<comment type="tissue specificity">
    <text>Ubiquitously expressed.</text>
</comment>
<comment type="domain">
    <text>The VHS domain functions as a recognition module for sorting signals composed of an acidic cluster followed by two leucines (DXXLL motif).</text>
</comment>
<comment type="domain">
    <text evidence="23">The GAT domain is responsible for interaction with ARF-GTP, UBC and RABEP1. Required for recruitment to the TGN it prevents ARF-GTP hydrolysis.</text>
</comment>
<comment type="domain">
    <text evidence="8">The unstructured hinge region contains clathrin-binding but no autoinhibitory (DXXLL) motifs.</text>
</comment>
<comment type="domain">
    <text>The GAE domain binds accessory proteins regulating GGAs function.</text>
</comment>
<comment type="PTM">
    <text evidence="13">Phosphorylated by CK2 and dephosphorylated by PP2A. Phosphorylation of GGA1 allows the internal DXXLL motif to bind the VHS domain and to inhibit the recognition of cargo signals.</text>
</comment>
<comment type="PTM">
    <text evidence="1">Ubiquitinated.</text>
</comment>
<comment type="similarity">
    <text evidence="36">Belongs to the GGA protein family.</text>
</comment>
<comment type="caution">
    <text evidence="36">It is uncertain whether Met-1 or Met-5 is the initiator.</text>
</comment>
<sequence length="639" mass="70384">MEPAMEPETLEARINRATNPLNKELDWASINGFCEQLNEDFEGPPLATRLLAHKIQSPQEWEAIQALTVLETCMKSCGKRFHDEVGKFRFLNELIKVVSPKYLGSRTSEKVKNKILELLYSWTVGLPEEVKIAEAYQMLKKQGIVKSDPKLPDDTTFPLPPPRPKNVIFEDEEKSKMLARLLKSSHPEDLRAANKLIKEMVQEDQKRMEKISKRVNAIEEVNNNVKLLTEMVMSHSQGGAAAGSSEDLMKELYQRCERMRPTLFRLASDTEDNDEALAEILQANDNLTQVINLYKQLVRGEEVNGDATAGSIPGSTSALLDLSGLDLPPAGTTYPAMPTRPGEQASPEQPSASVSLLDDELMSLGLSDPTPPSGPSLDGTGWNSFQSSDATEPPAPALAQAPSMESRPPAQTSLPASSGLDDLDLLGKTLLQQSLPPESQQVRWEKQQPTPRLTLRDLQNKSSSCSSPSSSATSLLHTVSPEPPRPPQQPVPTELSLASITVPLESIKPSNILPVTVYDQHGFRILFHFARDPLPGRSDVLVVVVSMLSTAPQPIRNIVFQSAVPKVMKVKLQPPSGTELPAFNPIVHPSAITQVLLLANPQKEKVRLRYKLTFTMGDQTYNEMGDVDQFPPPETWGSL</sequence>
<keyword id="KW-0002">3D-structure</keyword>
<keyword id="KW-0007">Acetylation</keyword>
<keyword id="KW-0025">Alternative splicing</keyword>
<keyword id="KW-0967">Endosome</keyword>
<keyword id="KW-0333">Golgi apparatus</keyword>
<keyword id="KW-0472">Membrane</keyword>
<keyword id="KW-0597">Phosphoprotein</keyword>
<keyword id="KW-0653">Protein transport</keyword>
<keyword id="KW-1267">Proteomics identification</keyword>
<keyword id="KW-1185">Reference proteome</keyword>
<keyword id="KW-0813">Transport</keyword>
<keyword id="KW-0832">Ubl conjugation</keyword>
<accession>Q9UJY5</accession>
<accession>A8K3D3</accession>
<accession>B0QYR7</accession>
<accession>Q5R3N1</accession>
<accession>Q5TG07</accession>
<accession>Q6IC75</accession>
<accession>Q86YA9</accession>
<accession>Q8NCS6</accession>
<accession>Q9BW94</accession>
<accession>Q9UG00</accession>
<accession>Q9UGW0</accession>
<accession>Q9UGW1</accession>
<gene>
    <name type="primary">GGA1</name>
</gene>
<organism>
    <name type="scientific">Homo sapiens</name>
    <name type="common">Human</name>
    <dbReference type="NCBI Taxonomy" id="9606"/>
    <lineage>
        <taxon>Eukaryota</taxon>
        <taxon>Metazoa</taxon>
        <taxon>Chordata</taxon>
        <taxon>Craniata</taxon>
        <taxon>Vertebrata</taxon>
        <taxon>Euteleostomi</taxon>
        <taxon>Mammalia</taxon>
        <taxon>Eutheria</taxon>
        <taxon>Euarchontoglires</taxon>
        <taxon>Primates</taxon>
        <taxon>Haplorrhini</taxon>
        <taxon>Catarrhini</taxon>
        <taxon>Hominidae</taxon>
        <taxon>Homo</taxon>
    </lineage>
</organism>
<name>GGA1_HUMAN</name>
<evidence type="ECO:0000250" key="1"/>
<evidence type="ECO:0000250" key="2">
    <source>
        <dbReference type="UniProtKB" id="Q8R0H9"/>
    </source>
</evidence>
<evidence type="ECO:0000255" key="3">
    <source>
        <dbReference type="PROSITE-ProRule" id="PRU00093"/>
    </source>
</evidence>
<evidence type="ECO:0000255" key="4">
    <source>
        <dbReference type="PROSITE-ProRule" id="PRU00218"/>
    </source>
</evidence>
<evidence type="ECO:0000255" key="5">
    <source>
        <dbReference type="PROSITE-ProRule" id="PRU00373"/>
    </source>
</evidence>
<evidence type="ECO:0000256" key="6">
    <source>
        <dbReference type="SAM" id="MobiDB-lite"/>
    </source>
</evidence>
<evidence type="ECO:0000269" key="7">
    <source>
    </source>
</evidence>
<evidence type="ECO:0000269" key="8">
    <source>
    </source>
</evidence>
<evidence type="ECO:0000269" key="9">
    <source>
    </source>
</evidence>
<evidence type="ECO:0000269" key="10">
    <source>
    </source>
</evidence>
<evidence type="ECO:0000269" key="11">
    <source>
    </source>
</evidence>
<evidence type="ECO:0000269" key="12">
    <source>
    </source>
</evidence>
<evidence type="ECO:0000269" key="13">
    <source>
    </source>
</evidence>
<evidence type="ECO:0000269" key="14">
    <source>
    </source>
</evidence>
<evidence type="ECO:0000269" key="15">
    <source>
    </source>
</evidence>
<evidence type="ECO:0000269" key="16">
    <source>
    </source>
</evidence>
<evidence type="ECO:0000269" key="17">
    <source>
    </source>
</evidence>
<evidence type="ECO:0000269" key="18">
    <source>
    </source>
</evidence>
<evidence type="ECO:0000269" key="19">
    <source>
    </source>
</evidence>
<evidence type="ECO:0000269" key="20">
    <source>
    </source>
</evidence>
<evidence type="ECO:0000269" key="21">
    <source>
    </source>
</evidence>
<evidence type="ECO:0000269" key="22">
    <source>
    </source>
</evidence>
<evidence type="ECO:0000269" key="23">
    <source>
    </source>
</evidence>
<evidence type="ECO:0000269" key="24">
    <source>
    </source>
</evidence>
<evidence type="ECO:0000269" key="25">
    <source>
    </source>
</evidence>
<evidence type="ECO:0000269" key="26">
    <source>
    </source>
</evidence>
<evidence type="ECO:0000269" key="27">
    <source>
    </source>
</evidence>
<evidence type="ECO:0000269" key="28">
    <source>
    </source>
</evidence>
<evidence type="ECO:0000269" key="29">
    <source>
    </source>
</evidence>
<evidence type="ECO:0000269" key="30">
    <source>
    </source>
</evidence>
<evidence type="ECO:0000269" key="31">
    <source>
    </source>
</evidence>
<evidence type="ECO:0000269" key="32">
    <source>
    </source>
</evidence>
<evidence type="ECO:0000303" key="33">
    <source>
    </source>
</evidence>
<evidence type="ECO:0000303" key="34">
    <source>
    </source>
</evidence>
<evidence type="ECO:0000303" key="35">
    <source>
    </source>
</evidence>
<evidence type="ECO:0000305" key="36"/>
<evidence type="ECO:0000305" key="37">
    <source>
    </source>
</evidence>
<evidence type="ECO:0007744" key="38">
    <source>
        <dbReference type="PDB" id="3G2S"/>
    </source>
</evidence>
<evidence type="ECO:0007744" key="39">
    <source>
        <dbReference type="PDB" id="3G2T"/>
    </source>
</evidence>
<evidence type="ECO:0007744" key="40">
    <source>
        <dbReference type="PDB" id="3G2U"/>
    </source>
</evidence>
<evidence type="ECO:0007744" key="41">
    <source>
        <dbReference type="PDB" id="3G2V"/>
    </source>
</evidence>
<evidence type="ECO:0007744" key="42">
    <source>
        <dbReference type="PDB" id="3G2W"/>
    </source>
</evidence>
<evidence type="ECO:0007744" key="43">
    <source>
    </source>
</evidence>
<evidence type="ECO:0007744" key="44">
    <source>
    </source>
</evidence>
<evidence type="ECO:0007744" key="45">
    <source>
    </source>
</evidence>
<evidence type="ECO:0007744" key="46">
    <source>
    </source>
</evidence>
<evidence type="ECO:0007829" key="47">
    <source>
        <dbReference type="PDB" id="1J2J"/>
    </source>
</evidence>
<evidence type="ECO:0007829" key="48">
    <source>
        <dbReference type="PDB" id="1NA8"/>
    </source>
</evidence>
<evidence type="ECO:0007829" key="49">
    <source>
        <dbReference type="PDB" id="1O3X"/>
    </source>
</evidence>
<evidence type="ECO:0007829" key="50">
    <source>
        <dbReference type="PDB" id="1UJK"/>
    </source>
</evidence>
<evidence type="ECO:0007829" key="51">
    <source>
        <dbReference type="PDB" id="1X79"/>
    </source>
</evidence>
<evidence type="ECO:0007829" key="52">
    <source>
        <dbReference type="PDB" id="2DWY"/>
    </source>
</evidence>
<evidence type="ECO:0007829" key="53">
    <source>
        <dbReference type="PDB" id="3G2S"/>
    </source>
</evidence>
<reference key="1">
    <citation type="journal article" date="2000" name="Mol. Biol. Cell">
        <title>A family of ADP-ribosylation factor effectors that can alter transport through the trans-Golgi.</title>
        <authorList>
            <person name="Boman A.L."/>
            <person name="Zhang C.-J."/>
            <person name="Zhu X."/>
            <person name="Kahn R.A."/>
        </authorList>
    </citation>
    <scope>NUCLEOTIDE SEQUENCE [MRNA] (ISOFORM 1)</scope>
</reference>
<reference key="2">
    <citation type="journal article" date="2000" name="J. Cell Biol.">
        <title>GGAs: a family of ADP ribosylation factor-binding proteins related to adaptors and associated with the Golgi complex.</title>
        <authorList>
            <person name="Dell'Angelica E.C."/>
            <person name="Puertollano R."/>
            <person name="Mullins C."/>
            <person name="Aguilar R.C."/>
            <person name="Vargas J.D."/>
            <person name="Hartnell L.M."/>
            <person name="Bonifacino J.S."/>
        </authorList>
    </citation>
    <scope>NUCLEOTIDE SEQUENCE [MRNA] (ISOFORM 1)</scope>
    <source>
        <tissue>Heart</tissue>
    </source>
</reference>
<reference key="3">
    <citation type="journal article" date="2000" name="J. Cell Biol.">
        <title>A family of proteins with gamma-adaptin and VHS domains that facilitate trafficking between the trans-Golgi network and the vacuole/lysosome.</title>
        <authorList>
            <person name="Hirst J."/>
            <person name="Lui W.W.Y."/>
            <person name="Bright N.A."/>
            <person name="Totty N."/>
            <person name="Seaman M.N.J."/>
            <person name="Robinson M.S."/>
        </authorList>
    </citation>
    <scope>NUCLEOTIDE SEQUENCE [MRNA] (ISOFORM 1)</scope>
</reference>
<reference key="4">
    <citation type="journal article" date="2004" name="Genome Biol.">
        <title>A genome annotation-driven approach to cloning the human ORFeome.</title>
        <authorList>
            <person name="Collins J.E."/>
            <person name="Wright C.L."/>
            <person name="Edwards C.A."/>
            <person name="Davis M.P."/>
            <person name="Grinham J.A."/>
            <person name="Cole C.G."/>
            <person name="Goward M.E."/>
            <person name="Aguado B."/>
            <person name="Mallya M."/>
            <person name="Mokrab Y."/>
            <person name="Huckle E.J."/>
            <person name="Beare D.M."/>
            <person name="Dunham I."/>
        </authorList>
    </citation>
    <scope>NUCLEOTIDE SEQUENCE [LARGE SCALE MRNA] (ISOFORM 6)</scope>
</reference>
<reference key="5">
    <citation type="journal article" date="2004" name="Nat. Genet.">
        <title>Complete sequencing and characterization of 21,243 full-length human cDNAs.</title>
        <authorList>
            <person name="Ota T."/>
            <person name="Suzuki Y."/>
            <person name="Nishikawa T."/>
            <person name="Otsuki T."/>
            <person name="Sugiyama T."/>
            <person name="Irie R."/>
            <person name="Wakamatsu A."/>
            <person name="Hayashi K."/>
            <person name="Sato H."/>
            <person name="Nagai K."/>
            <person name="Kimura K."/>
            <person name="Makita H."/>
            <person name="Sekine M."/>
            <person name="Obayashi M."/>
            <person name="Nishi T."/>
            <person name="Shibahara T."/>
            <person name="Tanaka T."/>
            <person name="Ishii S."/>
            <person name="Yamamoto J."/>
            <person name="Saito K."/>
            <person name="Kawai Y."/>
            <person name="Isono Y."/>
            <person name="Nakamura Y."/>
            <person name="Nagahari K."/>
            <person name="Murakami K."/>
            <person name="Yasuda T."/>
            <person name="Iwayanagi T."/>
            <person name="Wagatsuma M."/>
            <person name="Shiratori A."/>
            <person name="Sudo H."/>
            <person name="Hosoiri T."/>
            <person name="Kaku Y."/>
            <person name="Kodaira H."/>
            <person name="Kondo H."/>
            <person name="Sugawara M."/>
            <person name="Takahashi M."/>
            <person name="Kanda K."/>
            <person name="Yokoi T."/>
            <person name="Furuya T."/>
            <person name="Kikkawa E."/>
            <person name="Omura Y."/>
            <person name="Abe K."/>
            <person name="Kamihara K."/>
            <person name="Katsuta N."/>
            <person name="Sato K."/>
            <person name="Tanikawa M."/>
            <person name="Yamazaki M."/>
            <person name="Ninomiya K."/>
            <person name="Ishibashi T."/>
            <person name="Yamashita H."/>
            <person name="Murakawa K."/>
            <person name="Fujimori K."/>
            <person name="Tanai H."/>
            <person name="Kimata M."/>
            <person name="Watanabe M."/>
            <person name="Hiraoka S."/>
            <person name="Chiba Y."/>
            <person name="Ishida S."/>
            <person name="Ono Y."/>
            <person name="Takiguchi S."/>
            <person name="Watanabe S."/>
            <person name="Yosida M."/>
            <person name="Hotuta T."/>
            <person name="Kusano J."/>
            <person name="Kanehori K."/>
            <person name="Takahashi-Fujii A."/>
            <person name="Hara H."/>
            <person name="Tanase T.-O."/>
            <person name="Nomura Y."/>
            <person name="Togiya S."/>
            <person name="Komai F."/>
            <person name="Hara R."/>
            <person name="Takeuchi K."/>
            <person name="Arita M."/>
            <person name="Imose N."/>
            <person name="Musashino K."/>
            <person name="Yuuki H."/>
            <person name="Oshima A."/>
            <person name="Sasaki N."/>
            <person name="Aotsuka S."/>
            <person name="Yoshikawa Y."/>
            <person name="Matsunawa H."/>
            <person name="Ichihara T."/>
            <person name="Shiohata N."/>
            <person name="Sano S."/>
            <person name="Moriya S."/>
            <person name="Momiyama H."/>
            <person name="Satoh N."/>
            <person name="Takami S."/>
            <person name="Terashima Y."/>
            <person name="Suzuki O."/>
            <person name="Nakagawa S."/>
            <person name="Senoh A."/>
            <person name="Mizoguchi H."/>
            <person name="Goto Y."/>
            <person name="Shimizu F."/>
            <person name="Wakebe H."/>
            <person name="Hishigaki H."/>
            <person name="Watanabe T."/>
            <person name="Sugiyama A."/>
            <person name="Takemoto M."/>
            <person name="Kawakami B."/>
            <person name="Yamazaki M."/>
            <person name="Watanabe K."/>
            <person name="Kumagai A."/>
            <person name="Itakura S."/>
            <person name="Fukuzumi Y."/>
            <person name="Fujimori Y."/>
            <person name="Komiyama M."/>
            <person name="Tashiro H."/>
            <person name="Tanigami A."/>
            <person name="Fujiwara T."/>
            <person name="Ono T."/>
            <person name="Yamada K."/>
            <person name="Fujii Y."/>
            <person name="Ozaki K."/>
            <person name="Hirao M."/>
            <person name="Ohmori Y."/>
            <person name="Kawabata A."/>
            <person name="Hikiji T."/>
            <person name="Kobatake N."/>
            <person name="Inagaki H."/>
            <person name="Ikema Y."/>
            <person name="Okamoto S."/>
            <person name="Okitani R."/>
            <person name="Kawakami T."/>
            <person name="Noguchi S."/>
            <person name="Itoh T."/>
            <person name="Shigeta K."/>
            <person name="Senba T."/>
            <person name="Matsumura K."/>
            <person name="Nakajima Y."/>
            <person name="Mizuno T."/>
            <person name="Morinaga M."/>
            <person name="Sasaki M."/>
            <person name="Togashi T."/>
            <person name="Oyama M."/>
            <person name="Hata H."/>
            <person name="Watanabe M."/>
            <person name="Komatsu T."/>
            <person name="Mizushima-Sugano J."/>
            <person name="Satoh T."/>
            <person name="Shirai Y."/>
            <person name="Takahashi Y."/>
            <person name="Nakagawa K."/>
            <person name="Okumura K."/>
            <person name="Nagase T."/>
            <person name="Nomura N."/>
            <person name="Kikuchi H."/>
            <person name="Masuho Y."/>
            <person name="Yamashita R."/>
            <person name="Nakai K."/>
            <person name="Yada T."/>
            <person name="Nakamura Y."/>
            <person name="Ohara O."/>
            <person name="Isogai T."/>
            <person name="Sugano S."/>
        </authorList>
    </citation>
    <scope>NUCLEOTIDE SEQUENCE [LARGE SCALE MRNA] (ISOFORMS 1 AND 3)</scope>
    <source>
        <tissue>Brain</tissue>
    </source>
</reference>
<reference key="6">
    <citation type="journal article" date="1999" name="Nature">
        <title>The DNA sequence of human chromosome 22.</title>
        <authorList>
            <person name="Dunham I."/>
            <person name="Hunt A.R."/>
            <person name="Collins J.E."/>
            <person name="Bruskiewich R."/>
            <person name="Beare D.M."/>
            <person name="Clamp M."/>
            <person name="Smink L.J."/>
            <person name="Ainscough R."/>
            <person name="Almeida J.P."/>
            <person name="Babbage A.K."/>
            <person name="Bagguley C."/>
            <person name="Bailey J."/>
            <person name="Barlow K.F."/>
            <person name="Bates K.N."/>
            <person name="Beasley O.P."/>
            <person name="Bird C.P."/>
            <person name="Blakey S.E."/>
            <person name="Bridgeman A.M."/>
            <person name="Buck D."/>
            <person name="Burgess J."/>
            <person name="Burrill W.D."/>
            <person name="Burton J."/>
            <person name="Carder C."/>
            <person name="Carter N.P."/>
            <person name="Chen Y."/>
            <person name="Clark G."/>
            <person name="Clegg S.M."/>
            <person name="Cobley V.E."/>
            <person name="Cole C.G."/>
            <person name="Collier R.E."/>
            <person name="Connor R."/>
            <person name="Conroy D."/>
            <person name="Corby N.R."/>
            <person name="Coville G.J."/>
            <person name="Cox A.V."/>
            <person name="Davis J."/>
            <person name="Dawson E."/>
            <person name="Dhami P.D."/>
            <person name="Dockree C."/>
            <person name="Dodsworth S.J."/>
            <person name="Durbin R.M."/>
            <person name="Ellington A.G."/>
            <person name="Evans K.L."/>
            <person name="Fey J.M."/>
            <person name="Fleming K."/>
            <person name="French L."/>
            <person name="Garner A.A."/>
            <person name="Gilbert J.G.R."/>
            <person name="Goward M.E."/>
            <person name="Grafham D.V."/>
            <person name="Griffiths M.N.D."/>
            <person name="Hall C."/>
            <person name="Hall R.E."/>
            <person name="Hall-Tamlyn G."/>
            <person name="Heathcott R.W."/>
            <person name="Ho S."/>
            <person name="Holmes S."/>
            <person name="Hunt S.E."/>
            <person name="Jones M.C."/>
            <person name="Kershaw J."/>
            <person name="Kimberley A.M."/>
            <person name="King A."/>
            <person name="Laird G.K."/>
            <person name="Langford C.F."/>
            <person name="Leversha M.A."/>
            <person name="Lloyd C."/>
            <person name="Lloyd D.M."/>
            <person name="Martyn I.D."/>
            <person name="Mashreghi-Mohammadi M."/>
            <person name="Matthews L.H."/>
            <person name="Mccann O.T."/>
            <person name="Mcclay J."/>
            <person name="Mclaren S."/>
            <person name="McMurray A.A."/>
            <person name="Milne S.A."/>
            <person name="Mortimore B.J."/>
            <person name="Odell C.N."/>
            <person name="Pavitt R."/>
            <person name="Pearce A.V."/>
            <person name="Pearson D."/>
            <person name="Phillimore B.J.C.T."/>
            <person name="Phillips S.H."/>
            <person name="Plumb R.W."/>
            <person name="Ramsay H."/>
            <person name="Ramsey Y."/>
            <person name="Rogers L."/>
            <person name="Ross M.T."/>
            <person name="Scott C.E."/>
            <person name="Sehra H.K."/>
            <person name="Skuce C.D."/>
            <person name="Smalley S."/>
            <person name="Smith M.L."/>
            <person name="Soderlund C."/>
            <person name="Spragon L."/>
            <person name="Steward C.A."/>
            <person name="Sulston J.E."/>
            <person name="Swann R.M."/>
            <person name="Vaudin M."/>
            <person name="Wall M."/>
            <person name="Wallis J.M."/>
            <person name="Whiteley M.N."/>
            <person name="Willey D.L."/>
            <person name="Williams L."/>
            <person name="Williams S.A."/>
            <person name="Williamson H."/>
            <person name="Wilmer T.E."/>
            <person name="Wilming L."/>
            <person name="Wright C.L."/>
            <person name="Hubbard T."/>
            <person name="Bentley D.R."/>
            <person name="Beck S."/>
            <person name="Rogers J."/>
            <person name="Shimizu N."/>
            <person name="Minoshima S."/>
            <person name="Kawasaki K."/>
            <person name="Sasaki T."/>
            <person name="Asakawa S."/>
            <person name="Kudoh J."/>
            <person name="Shintani A."/>
            <person name="Shibuya K."/>
            <person name="Yoshizaki Y."/>
            <person name="Aoki N."/>
            <person name="Mitsuyama S."/>
            <person name="Roe B.A."/>
            <person name="Chen F."/>
            <person name="Chu L."/>
            <person name="Crabtree J."/>
            <person name="Deschamps S."/>
            <person name="Do A."/>
            <person name="Do T."/>
            <person name="Dorman A."/>
            <person name="Fang F."/>
            <person name="Fu Y."/>
            <person name="Hu P."/>
            <person name="Hua A."/>
            <person name="Kenton S."/>
            <person name="Lai H."/>
            <person name="Lao H.I."/>
            <person name="Lewis J."/>
            <person name="Lewis S."/>
            <person name="Lin S.-P."/>
            <person name="Loh P."/>
            <person name="Malaj E."/>
            <person name="Nguyen T."/>
            <person name="Pan H."/>
            <person name="Phan S."/>
            <person name="Qi S."/>
            <person name="Qian Y."/>
            <person name="Ray L."/>
            <person name="Ren Q."/>
            <person name="Shaull S."/>
            <person name="Sloan D."/>
            <person name="Song L."/>
            <person name="Wang Q."/>
            <person name="Wang Y."/>
            <person name="Wang Z."/>
            <person name="White J."/>
            <person name="Willingham D."/>
            <person name="Wu H."/>
            <person name="Yao Z."/>
            <person name="Zhan M."/>
            <person name="Zhang G."/>
            <person name="Chissoe S."/>
            <person name="Murray J."/>
            <person name="Miller N."/>
            <person name="Minx P."/>
            <person name="Fulton R."/>
            <person name="Johnson D."/>
            <person name="Bemis G."/>
            <person name="Bentley D."/>
            <person name="Bradshaw H."/>
            <person name="Bourne S."/>
            <person name="Cordes M."/>
            <person name="Du Z."/>
            <person name="Fulton L."/>
            <person name="Goela D."/>
            <person name="Graves T."/>
            <person name="Hawkins J."/>
            <person name="Hinds K."/>
            <person name="Kemp K."/>
            <person name="Latreille P."/>
            <person name="Layman D."/>
            <person name="Ozersky P."/>
            <person name="Rohlfing T."/>
            <person name="Scheet P."/>
            <person name="Walker C."/>
            <person name="Wamsley A."/>
            <person name="Wohldmann P."/>
            <person name="Pepin K."/>
            <person name="Nelson J."/>
            <person name="Korf I."/>
            <person name="Bedell J.A."/>
            <person name="Hillier L.W."/>
            <person name="Mardis E."/>
            <person name="Waterston R."/>
            <person name="Wilson R."/>
            <person name="Emanuel B.S."/>
            <person name="Shaikh T."/>
            <person name="Kurahashi H."/>
            <person name="Saitta S."/>
            <person name="Budarf M.L."/>
            <person name="McDermid H.E."/>
            <person name="Johnson A."/>
            <person name="Wong A.C.C."/>
            <person name="Morrow B.E."/>
            <person name="Edelmann L."/>
            <person name="Kim U.J."/>
            <person name="Shizuya H."/>
            <person name="Simon M.I."/>
            <person name="Dumanski J.P."/>
            <person name="Peyrard M."/>
            <person name="Kedra D."/>
            <person name="Seroussi E."/>
            <person name="Fransson I."/>
            <person name="Tapia I."/>
            <person name="Bruder C.E."/>
            <person name="O'Brien K.P."/>
            <person name="Wilkinson P."/>
            <person name="Bodenteich A."/>
            <person name="Hartman K."/>
            <person name="Hu X."/>
            <person name="Khan A.S."/>
            <person name="Lane L."/>
            <person name="Tilahun Y."/>
            <person name="Wright H."/>
        </authorList>
    </citation>
    <scope>NUCLEOTIDE SEQUENCE [LARGE SCALE GENOMIC DNA]</scope>
</reference>
<reference key="7">
    <citation type="submission" date="2005-07" db="EMBL/GenBank/DDBJ databases">
        <authorList>
            <person name="Mural R.J."/>
            <person name="Istrail S."/>
            <person name="Sutton G.G."/>
            <person name="Florea L."/>
            <person name="Halpern A.L."/>
            <person name="Mobarry C.M."/>
            <person name="Lippert R."/>
            <person name="Walenz B."/>
            <person name="Shatkay H."/>
            <person name="Dew I."/>
            <person name="Miller J.R."/>
            <person name="Flanigan M.J."/>
            <person name="Edwards N.J."/>
            <person name="Bolanos R."/>
            <person name="Fasulo D."/>
            <person name="Halldorsson B.V."/>
            <person name="Hannenhalli S."/>
            <person name="Turner R."/>
            <person name="Yooseph S."/>
            <person name="Lu F."/>
            <person name="Nusskern D.R."/>
            <person name="Shue B.C."/>
            <person name="Zheng X.H."/>
            <person name="Zhong F."/>
            <person name="Delcher A.L."/>
            <person name="Huson D.H."/>
            <person name="Kravitz S.A."/>
            <person name="Mouchard L."/>
            <person name="Reinert K."/>
            <person name="Remington K.A."/>
            <person name="Clark A.G."/>
            <person name="Waterman M.S."/>
            <person name="Eichler E.E."/>
            <person name="Adams M.D."/>
            <person name="Hunkapiller M.W."/>
            <person name="Myers E.W."/>
            <person name="Venter J.C."/>
        </authorList>
    </citation>
    <scope>NUCLEOTIDE SEQUENCE [LARGE SCALE GENOMIC DNA]</scope>
</reference>
<reference key="8">
    <citation type="journal article" date="2004" name="Genome Res.">
        <title>The status, quality, and expansion of the NIH full-length cDNA project: the Mammalian Gene Collection (MGC).</title>
        <authorList>
            <consortium name="The MGC Project Team"/>
        </authorList>
    </citation>
    <scope>NUCLEOTIDE SEQUENCE [LARGE SCALE MRNA] (ISOFORMS 4 AND 5)</scope>
    <scope>NUCLEOTIDE SEQUENCE [LARGE SCALE MRNA] OF 275-639 (ISOFORMS 1/2/3)</scope>
    <source>
        <tissue>Brain</tissue>
    </source>
</reference>
<reference key="9">
    <citation type="journal article" date="2007" name="BMC Genomics">
        <title>The full-ORF clone resource of the German cDNA consortium.</title>
        <authorList>
            <person name="Bechtel S."/>
            <person name="Rosenfelder H."/>
            <person name="Duda A."/>
            <person name="Schmidt C.P."/>
            <person name="Ernst U."/>
            <person name="Wellenreuther R."/>
            <person name="Mehrle A."/>
            <person name="Schuster C."/>
            <person name="Bahr A."/>
            <person name="Bloecker H."/>
            <person name="Heubner D."/>
            <person name="Hoerlein A."/>
            <person name="Michel G."/>
            <person name="Wedler H."/>
            <person name="Koehrer K."/>
            <person name="Ottenwaelder B."/>
            <person name="Poustka A."/>
            <person name="Wiemann S."/>
            <person name="Schupp I."/>
        </authorList>
    </citation>
    <scope>NUCLEOTIDE SEQUENCE [LARGE SCALE MRNA] OF 31-639 (ISOFORM 1)</scope>
    <source>
        <tissue>Testis</tissue>
    </source>
</reference>
<reference key="10">
    <citation type="journal article" date="2000" name="Biochem. Biophys. Res. Commun.">
        <title>Adaptor gamma ear homology domain conserved in gamma-adaptin and GGA proteins that interact with gamma-synergin.</title>
        <authorList>
            <person name="Takatsu H."/>
            <person name="Yoshino K."/>
            <person name="Nakayama K."/>
        </authorList>
    </citation>
    <scope>INTERACTION WITH SYNRG</scope>
</reference>
<reference key="11">
    <citation type="journal article" date="2001" name="Cell">
        <title>The GGAs promote ARF-dependent recruitment of clathrin to the TGN.</title>
        <authorList>
            <person name="Puertollano R."/>
            <person name="Randazzo P.A."/>
            <person name="Presley J.F."/>
            <person name="Hartnell L.M."/>
            <person name="Bonifacino J.S."/>
        </authorList>
    </citation>
    <scope>INTERACTION WITH CLATHRIN</scope>
    <scope>FUNCTION</scope>
    <scope>MUTAGENESIS OF 356-LEU--GLU-360</scope>
    <scope>DOMAIN</scope>
</reference>
<reference key="12">
    <citation type="journal article" date="2001" name="J. Biol. Chem.">
        <title>Golgi-localizing, gamma-adaptin ear homology domain, ADP-ribosylation factor-binding (GGA) proteins interact with acidic dileucine sequences within the cytoplasmic domains of sorting receptors through their Vps27p/Hrs/STAM (VHS) domains.</title>
        <authorList>
            <person name="Takatsu H."/>
            <person name="Katoh Y."/>
            <person name="Shiba Y."/>
            <person name="Nakayama K."/>
        </authorList>
    </citation>
    <scope>INTERACTION WITH SORT1; LRP3 AND IGF2R</scope>
</reference>
<reference key="13">
    <citation type="journal article" date="2001" name="Science">
        <title>Sorting of mannose 6-phosphate receptors mediated by the GGAs.</title>
        <authorList>
            <person name="Puertollano R."/>
            <person name="Aguilar R.C."/>
            <person name="Gorshkova I."/>
            <person name="Crouch R.J."/>
            <person name="Bonifacino J.S."/>
        </authorList>
    </citation>
    <scope>INTERACTION WITH M6PR AND IGF2R</scope>
</reference>
<reference key="14">
    <citation type="journal article" date="2002" name="Biochem. J.">
        <title>GGA proteins associate with Golgi membranes through interaction between their GGAH domains and ADP-ribosylation factors.</title>
        <authorList>
            <person name="Takatsu H."/>
            <person name="Yoshino K."/>
            <person name="Toda K."/>
            <person name="Nakayama K."/>
        </authorList>
    </citation>
    <scope>INTERACTION WITH ARF1; ARF5 AND ARF6</scope>
</reference>
<reference key="15">
    <citation type="journal article" date="2002" name="FEBS Lett.">
        <title>The sorLA cytoplasmic domain interacts with GGA1 and -2 and defines minimum requirements for GGA binding.</title>
        <authorList>
            <person name="Jacobsen L."/>
            <person name="Madsen P."/>
            <person name="Nielsen M.S."/>
            <person name="Geraerts W.P.M."/>
            <person name="Gliemann J."/>
            <person name="Smit A.B."/>
            <person name="Petersen C.M."/>
        </authorList>
    </citation>
    <scope>INTERACTION WITH SORT1 AND SORL1</scope>
</reference>
<reference key="16">
    <citation type="journal article" date="2002" name="Proc. Natl. Acad. Sci. U.S.A.">
        <title>Autoinhibition of the ligand-binding site of GGA1/3 VHS domains by an internal acidic cluster-dileucine motif.</title>
        <authorList>
            <person name="Doray B."/>
            <person name="Bruns K."/>
            <person name="Ghosh P."/>
            <person name="Kornfeld S.A."/>
        </authorList>
    </citation>
    <scope>MUTAGENESIS OF ASN-92; SER-355; ASP-358 AND 361-LEU-MET-362</scope>
    <scope>PHOSPHORYLATION AT SER-355</scope>
    <scope>INTERACTION WITH IGF2R</scope>
</reference>
<reference key="17">
    <citation type="journal article" date="2003" name="Biochemistry">
        <title>Biochemical and structural characterization of the interaction of memapsin 2 (beta-secretase) cytosolic domain with the VHS domain of GGA proteins.</title>
        <authorList>
            <person name="He X."/>
            <person name="Zhu G."/>
            <person name="Koelsch G."/>
            <person name="Rodgers K.K."/>
            <person name="Zhang X.C."/>
            <person name="Tang J."/>
        </authorList>
    </citation>
    <scope>INTERACTION WITH BACE1</scope>
</reference>
<reference key="18">
    <citation type="journal article" date="2003" name="EMBO J.">
        <title>Divalent interaction of the GGAs with the Rabaptin-5-Rabex-5 complex.</title>
        <authorList>
            <person name="Mattera R."/>
            <person name="Arighi C.N."/>
            <person name="Lodge R."/>
            <person name="Zerial M."/>
            <person name="Bonifacino J.S."/>
        </authorList>
    </citation>
    <scope>INTERACTION WITH RABEP1 AND RABGEF1</scope>
</reference>
<reference key="19">
    <citation type="journal article" date="2003" name="J. Biol. Chem.">
        <title>Phosphorylation-induced conformational changes regulate GGAs 1 and 3 function at the trans-Golgi network.</title>
        <authorList>
            <person name="Ghosh P."/>
            <person name="Kornfeld S."/>
        </authorList>
    </citation>
    <scope>REGULATION BY PHOSPHORYLATION</scope>
    <scope>DEPHOSPHORYLATION BY PP2A</scope>
</reference>
<reference key="20">
    <citation type="journal article" date="2003" name="J. Cell Biol.">
        <title>EpsinR: an AP1/clathrin interacting protein involved in vesicle trafficking.</title>
        <authorList>
            <person name="Mills I.G."/>
            <person name="Praefcke G.J.K."/>
            <person name="Vallis Y."/>
            <person name="Peter B.J."/>
            <person name="Olesen L.E."/>
            <person name="Gallop J.L."/>
            <person name="Butler P.J.G."/>
            <person name="Evans P.R."/>
            <person name="McMahon H.T."/>
        </authorList>
    </citation>
    <scope>INTERACTION WITH EPN4</scope>
</reference>
<reference key="21">
    <citation type="journal article" date="2003" name="J. Cell Biol.">
        <title>Mammalian GGAs act together to sort mannose 6-phosphate receptors.</title>
        <authorList>
            <person name="Ghosh P."/>
            <person name="Griffith J."/>
            <person name="Geuze H.J."/>
            <person name="Kornfeld S."/>
        </authorList>
    </citation>
    <scope>INTERACTION WITH GGA2 AND GGA3</scope>
    <scope>SUBCELLULAR LOCATION</scope>
</reference>
<reference key="22">
    <citation type="journal article" date="2003" name="Mol. Biol. Cell">
        <title>Binding partners for the COOH-terminal appendage domains of the GGAs and gamma-adaptin.</title>
        <authorList>
            <person name="Lui W.W.Y."/>
            <person name="Collins B.M."/>
            <person name="Hirst J."/>
            <person name="Motley A."/>
            <person name="Millar C."/>
            <person name="Schu P."/>
            <person name="Owen D.J."/>
            <person name="Robinson M.S."/>
        </authorList>
    </citation>
    <scope>INTERACTION WITH CCDC91; P200 AND SYNRG</scope>
    <scope>MUTAGENESIS OF ALA-563; VAL-564; VAL-570 AND LEU-572</scope>
</reference>
<reference key="23">
    <citation type="journal article" date="2004" name="J. Biol. Chem.">
        <title>GAT (GGA and Tom1) domain responsible for ubiquitin binding and ubiquitination.</title>
        <authorList>
            <person name="Shiba Y."/>
            <person name="Katoh Y."/>
            <person name="Shiba T."/>
            <person name="Yoshino K."/>
            <person name="Takatsu H."/>
            <person name="Kobayashi H."/>
            <person name="Shin H.-W."/>
            <person name="Wakatsuki S."/>
            <person name="Nakayama K."/>
        </authorList>
    </citation>
    <scope>INTERACTION WITH UBC</scope>
</reference>
<reference key="24">
    <citation type="journal article" date="2004" name="J. Biol. Chem.">
        <title>Definition of the consensus motif recognized by gamma-adaptin ear domains.</title>
        <authorList>
            <person name="Mattera R."/>
            <person name="Ritter B."/>
            <person name="Sidhu S.S."/>
            <person name="McPherson P.S."/>
            <person name="Bonifacino J.S."/>
        </authorList>
    </citation>
    <scope>INTERACTION WITH RABEP1; NECAP1; NECAP2 AND AFTPH</scope>
</reference>
<reference key="25">
    <citation type="journal article" date="2004" name="J. Biol. Chem.">
        <title>The trihelical bundle subdomain of the GGA proteins interacts with multiple partners through overlapping but distinct sites.</title>
        <authorList>
            <person name="Mattera R."/>
            <person name="Puertollano R."/>
            <person name="Smith W.J."/>
            <person name="Bonifacino J.S."/>
        </authorList>
    </citation>
    <scope>INTERACTION WITH ARF1; RABEP1; UBC AND TSG101</scope>
    <scope>MUTAGENESIS OF LEU-182; ASN-194; ILE-197; LYS-198; MET-200; ASP-204; MET-259; ARG-260; PHE-264; ALA-267; LEU-277; LEU-281 AND ASN-284</scope>
    <scope>DOMAIN</scope>
</reference>
<reference key="26">
    <citation type="journal article" date="2004" name="Nat. Cell Biol.">
        <title>Interactions of GGA3 with the ubiquitin sorting machinery.</title>
        <authorList>
            <person name="Puertollano R."/>
            <person name="Bonifacino J.S."/>
        </authorList>
    </citation>
    <scope>SUBCELLULAR LOCATION</scope>
</reference>
<reference key="27">
    <citation type="journal article" date="2005" name="J. Biol. Chem.">
        <title>GGA proteins mediate the recycling pathway of memapsin 2 (BACE).</title>
        <authorList>
            <person name="He X."/>
            <person name="Li F."/>
            <person name="Chang W.P."/>
            <person name="Tang J."/>
        </authorList>
    </citation>
    <scope>FUNCTION</scope>
</reference>
<reference key="28">
    <citation type="journal article" date="2005" name="Mol. Biol. Cell">
        <title>The aftiphilin/p200/gamma-synergin complex.</title>
        <authorList>
            <person name="Hirst J."/>
            <person name="Borner G.H."/>
            <person name="Harbour M."/>
            <person name="Robinson M.S."/>
        </authorList>
    </citation>
    <scope>INTERACTION WITH AFTPH; HEATR5B AND SYNRG</scope>
</reference>
<reference key="29">
    <citation type="journal article" date="2005" name="Mol. Cell. Neurosci.">
        <title>GGA proteins regulate retrograde transport of BACE1 from endosomes to the trans-Golgi network.</title>
        <authorList>
            <person name="Wahle T."/>
            <person name="Prager K."/>
            <person name="Raffler N."/>
            <person name="Haass C."/>
            <person name="Famulok M."/>
            <person name="Walter J."/>
        </authorList>
    </citation>
    <scope>FUNCTION</scope>
    <scope>SUBCELLULAR LOCATION</scope>
    <scope>INTERACTION WITH BACE1</scope>
</reference>
<reference key="30">
    <citation type="journal article" date="2007" name="J. Biol. Chem.">
        <title>SorLA/LR11 regulates processing of amyloid precursor protein via interaction with adaptors GGA and PACS-1.</title>
        <authorList>
            <person name="Schmidt V."/>
            <person name="Sporbert A."/>
            <person name="Rohe M."/>
            <person name="Reimer T."/>
            <person name="Rehm A."/>
            <person name="Andersen O.M."/>
            <person name="Willnow T.E."/>
        </authorList>
    </citation>
    <scope>INTERACTION WITH SORL1</scope>
</reference>
<reference key="31">
    <citation type="journal article" date="2007" name="Science">
        <title>ATM and ATR substrate analysis reveals extensive protein networks responsive to DNA damage.</title>
        <authorList>
            <person name="Matsuoka S."/>
            <person name="Ballif B.A."/>
            <person name="Smogorzewska A."/>
            <person name="McDonald E.R. III"/>
            <person name="Hurov K.E."/>
            <person name="Luo J."/>
            <person name="Bakalarski C.E."/>
            <person name="Zhao Z."/>
            <person name="Solimini N."/>
            <person name="Lerenthal Y."/>
            <person name="Shiloh Y."/>
            <person name="Gygi S.P."/>
            <person name="Elledge S.J."/>
        </authorList>
    </citation>
    <scope>IDENTIFICATION BY MASS SPECTROMETRY [LARGE SCALE ANALYSIS]</scope>
    <source>
        <tissue>Embryonic kidney</tissue>
    </source>
</reference>
<reference key="32">
    <citation type="journal article" date="2009" name="Anal. Chem.">
        <title>Lys-N and trypsin cover complementary parts of the phosphoproteome in a refined SCX-based approach.</title>
        <authorList>
            <person name="Gauci S."/>
            <person name="Helbig A.O."/>
            <person name="Slijper M."/>
            <person name="Krijgsveld J."/>
            <person name="Heck A.J."/>
            <person name="Mohammed S."/>
        </authorList>
    </citation>
    <scope>ACETYLATION [LARGE SCALE ANALYSIS] AT MET-1</scope>
    <scope>IDENTIFICATION BY MASS SPECTROMETRY [LARGE SCALE ANALYSIS]</scope>
</reference>
<reference key="33">
    <citation type="journal article" date="2009" name="Sci. Signal.">
        <title>Quantitative phosphoproteomic analysis of T cell receptor signaling reveals system-wide modulation of protein-protein interactions.</title>
        <authorList>
            <person name="Mayya V."/>
            <person name="Lundgren D.H."/>
            <person name="Hwang S.-I."/>
            <person name="Rezaul K."/>
            <person name="Wu L."/>
            <person name="Eng J.K."/>
            <person name="Rodionov V."/>
            <person name="Han D.K."/>
        </authorList>
    </citation>
    <scope>IDENTIFICATION BY MASS SPECTROMETRY [LARGE SCALE ANALYSIS]</scope>
    <source>
        <tissue>Leukemic T-cell</tissue>
    </source>
</reference>
<reference key="34">
    <citation type="journal article" date="2010" name="Oncogene">
        <title>Multiple modification and protein interaction signals drive the Ring finger protein 11 (RNF11) E3 ligase to the endosomal compartment.</title>
        <authorList>
            <person name="Santonico E."/>
            <person name="Belleudi F."/>
            <person name="Panni S."/>
            <person name="Torrisi M.R."/>
            <person name="Cesareni G."/>
            <person name="Castagnoli L."/>
        </authorList>
    </citation>
    <scope>INTERACTION WITH RNF11</scope>
</reference>
<reference key="35">
    <citation type="journal article" date="2011" name="BMC Syst. Biol.">
        <title>Initial characterization of the human central proteome.</title>
        <authorList>
            <person name="Burkard T.R."/>
            <person name="Planyavsky M."/>
            <person name="Kaupe I."/>
            <person name="Breitwieser F.P."/>
            <person name="Buerckstuemmer T."/>
            <person name="Bennett K.L."/>
            <person name="Superti-Furga G."/>
            <person name="Colinge J."/>
        </authorList>
    </citation>
    <scope>IDENTIFICATION BY MASS SPECTROMETRY [LARGE SCALE ANALYSIS]</scope>
</reference>
<reference key="36">
    <citation type="journal article" date="2012" name="EMBO J.">
        <title>Structural basis for Arf6-MKLP1 complex formation on the Flemming body responsible for cytokinesis.</title>
        <authorList>
            <person name="Makyio H."/>
            <person name="Ohgi M."/>
            <person name="Takei T."/>
            <person name="Takahashi S."/>
            <person name="Takatsu H."/>
            <person name="Katoh Y."/>
            <person name="Hanai A."/>
            <person name="Ueda T."/>
            <person name="Kanaho Y."/>
            <person name="Xie Y."/>
            <person name="Shin H.W."/>
            <person name="Kamikubo H."/>
            <person name="Kataoka M."/>
            <person name="Kawasaki M."/>
            <person name="Kato R."/>
            <person name="Wakatsuki S."/>
            <person name="Nakayama K."/>
        </authorList>
    </citation>
    <scope>INTERACTION WITH ARF6</scope>
</reference>
<reference key="37">
    <citation type="journal article" date="2012" name="Proc. Natl. Acad. Sci. U.S.A.">
        <title>N-terminal acetylome analyses and functional insights of the N-terminal acetyltransferase NatB.</title>
        <authorList>
            <person name="Van Damme P."/>
            <person name="Lasa M."/>
            <person name="Polevoda B."/>
            <person name="Gazquez C."/>
            <person name="Elosegui-Artola A."/>
            <person name="Kim D.S."/>
            <person name="De Juan-Pardo E."/>
            <person name="Demeyer K."/>
            <person name="Hole K."/>
            <person name="Larrea E."/>
            <person name="Timmerman E."/>
            <person name="Prieto J."/>
            <person name="Arnesen T."/>
            <person name="Sherman F."/>
            <person name="Gevaert K."/>
            <person name="Aldabe R."/>
        </authorList>
    </citation>
    <scope>ACETYLATION [LARGE SCALE ANALYSIS] AT MET-1</scope>
    <scope>IDENTIFICATION BY MASS SPECTROMETRY [LARGE SCALE ANALYSIS]</scope>
</reference>
<reference key="38">
    <citation type="journal article" date="2013" name="J. Proteome Res.">
        <title>Toward a comprehensive characterization of a human cancer cell phosphoproteome.</title>
        <authorList>
            <person name="Zhou H."/>
            <person name="Di Palma S."/>
            <person name="Preisinger C."/>
            <person name="Peng M."/>
            <person name="Polat A.N."/>
            <person name="Heck A.J."/>
            <person name="Mohammed S."/>
        </authorList>
    </citation>
    <scope>PHOSPHORYLATION [LARGE SCALE ANALYSIS] AT SER-185</scope>
    <scope>IDENTIFICATION BY MASS SPECTROMETRY [LARGE SCALE ANALYSIS]</scope>
    <source>
        <tissue>Erythroleukemia</tissue>
    </source>
</reference>
<reference key="39">
    <citation type="journal article" date="2014" name="J. Proteomics">
        <title>An enzyme assisted RP-RPLC approach for in-depth analysis of human liver phosphoproteome.</title>
        <authorList>
            <person name="Bian Y."/>
            <person name="Song C."/>
            <person name="Cheng K."/>
            <person name="Dong M."/>
            <person name="Wang F."/>
            <person name="Huang J."/>
            <person name="Sun D."/>
            <person name="Wang L."/>
            <person name="Ye M."/>
            <person name="Zou H."/>
        </authorList>
    </citation>
    <scope>PHOSPHORYLATION [LARGE SCALE ANALYSIS] AT SER-418</scope>
    <scope>IDENTIFICATION BY MASS SPECTROMETRY [LARGE SCALE ANALYSIS]</scope>
    <source>
        <tissue>Liver</tissue>
    </source>
</reference>
<reference key="40">
    <citation type="journal article" date="2016" name="Sci. Rep.">
        <title>Regulation of alpha2B-Adrenergic Receptor Cell Surface Transport by GGA1 and GGA2.</title>
        <authorList>
            <person name="Zhang M."/>
            <person name="Huang W."/>
            <person name="Gao J."/>
            <person name="Terry A.V."/>
            <person name="Wu G."/>
        </authorList>
    </citation>
    <scope>FUNCTION</scope>
    <scope>INTERACTION WITH ADRA2B</scope>
</reference>
<reference key="41">
    <citation type="journal article" date="2002" name="Nature">
        <title>Structural basis for recognition of acidic-cluster dileucine sequence by GGA1.</title>
        <authorList>
            <person name="Shiba T."/>
            <person name="Takatsu H."/>
            <person name="Nogi T."/>
            <person name="Matsugaki N."/>
            <person name="Kawasaki M."/>
            <person name="Igarashi N."/>
            <person name="Suzuki M."/>
            <person name="Kato R."/>
            <person name="Earnest T."/>
            <person name="Nakayama K."/>
            <person name="Wakatsuki S."/>
        </authorList>
    </citation>
    <scope>X-RAY CRYSTALLOGRAPHY (2.1 ANGSTROMS) OF 1-147</scope>
</reference>
<reference key="42">
    <citation type="journal article" date="2003" name="Nat. Struct. Biol.">
        <title>Molecular mechanism of membrane recruitment of GGA by ARF in lysosomal protein transport.</title>
        <authorList>
            <person name="Shiba T."/>
            <person name="Kawasaki M."/>
            <person name="Takatsu H."/>
            <person name="Nogi T."/>
            <person name="Matsugaki N."/>
            <person name="Igarashi N."/>
            <person name="Suzuki M."/>
            <person name="Kato R."/>
            <person name="Nakayama K."/>
            <person name="Wakatsuki S."/>
        </authorList>
    </citation>
    <scope>X-RAY CRYSTALLOGRAPHY (1.6 ANGSTROMS) OF 168-208 IN COMPLEX WITH MOUSE ARF1</scope>
</reference>
<reference key="43">
    <citation type="journal article" date="2003" name="Nat. Struct. Biol.">
        <title>Structural basis for binding of accessory proteins by the appendage domain of GGAs.</title>
        <authorList>
            <person name="Collins B.M."/>
            <person name="Praefcke G.J."/>
            <person name="Robinson M.S."/>
            <person name="Owen D.J."/>
        </authorList>
    </citation>
    <scope>X-RAY CRYSTALLOGRAPHY (2.5 ANGSTROMS) OF 2-16 IN COMPLEX WITH CCDC91</scope>
</reference>
<reference evidence="38 39 40 41 42" key="44">
    <citation type="journal article" date="2010" name="Traffic">
        <title>GGA autoinhibition revisited.</title>
        <authorList>
            <person name="Cramer J.F."/>
            <person name="Gustafsen C."/>
            <person name="Behrens M.A."/>
            <person name="Oliveira C.L."/>
            <person name="Pedersen J.S."/>
            <person name="Madsen P."/>
            <person name="Petersen C.M."/>
            <person name="Thirup S.S."/>
        </authorList>
    </citation>
    <scope>X-RAY CRYSTALLOGRAPHY (1.7 ANGSTROMS) OF 1-147 IN COMPLEX WITH SORL1 AND SORT1</scope>
    <scope>INTERACTION WITH SORL1 AND SORT1</scope>
    <scope>MUTAGENESIS OF SER-355</scope>
</reference>
<reference key="45">
    <citation type="journal article" date="2006" name="Science">
        <title>The consensus coding sequences of human breast and colorectal cancers.</title>
        <authorList>
            <person name="Sjoeblom T."/>
            <person name="Jones S."/>
            <person name="Wood L.D."/>
            <person name="Parsons D.W."/>
            <person name="Lin J."/>
            <person name="Barber T.D."/>
            <person name="Mandelker D."/>
            <person name="Leary R.J."/>
            <person name="Ptak J."/>
            <person name="Silliman N."/>
            <person name="Szabo S."/>
            <person name="Buckhaults P."/>
            <person name="Farrell C."/>
            <person name="Meeh P."/>
            <person name="Markowitz S.D."/>
            <person name="Willis J."/>
            <person name="Dawson D."/>
            <person name="Willson J.K.V."/>
            <person name="Gazdar A.F."/>
            <person name="Hartigan J."/>
            <person name="Wu L."/>
            <person name="Liu C."/>
            <person name="Parmigiani G."/>
            <person name="Park B.H."/>
            <person name="Bachman K.E."/>
            <person name="Papadopoulos N."/>
            <person name="Vogelstein B."/>
            <person name="Kinzler K.W."/>
            <person name="Velculescu V.E."/>
        </authorList>
    </citation>
    <scope>VARIANTS [LARGE SCALE ANALYSIS] SER-239 AND ALA-484</scope>
</reference>
<feature type="chain" id="PRO_0000212680" description="ADP-ribosylation factor-binding protein GGA1">
    <location>
        <begin position="1"/>
        <end position="639"/>
    </location>
</feature>
<feature type="domain" description="VHS" evidence="4">
    <location>
        <begin position="17"/>
        <end position="147"/>
    </location>
</feature>
<feature type="domain" description="GAT" evidence="5">
    <location>
        <begin position="171"/>
        <end position="299"/>
    </location>
</feature>
<feature type="domain" description="GAE" evidence="3">
    <location>
        <begin position="510"/>
        <end position="631"/>
    </location>
</feature>
<feature type="region of interest" description="Interaction with ARF3">
    <location>
        <begin position="114"/>
        <end position="274"/>
    </location>
</feature>
<feature type="region of interest" description="Unstructured hinge">
    <location>
        <begin position="300"/>
        <end position="509"/>
    </location>
</feature>
<feature type="region of interest" description="Disordered" evidence="6">
    <location>
        <begin position="320"/>
        <end position="421"/>
    </location>
</feature>
<feature type="region of interest" description="Disordered" evidence="6">
    <location>
        <begin position="434"/>
        <end position="492"/>
    </location>
</feature>
<feature type="short sequence motif" description="Autoinhibitory">
    <location>
        <begin position="358"/>
        <end position="362"/>
    </location>
</feature>
<feature type="compositionally biased region" description="Polar residues" evidence="6">
    <location>
        <begin position="381"/>
        <end position="390"/>
    </location>
</feature>
<feature type="compositionally biased region" description="Low complexity" evidence="6">
    <location>
        <begin position="462"/>
        <end position="480"/>
    </location>
</feature>
<feature type="compositionally biased region" description="Pro residues" evidence="6">
    <location>
        <begin position="481"/>
        <end position="490"/>
    </location>
</feature>
<feature type="modified residue" description="N-acetylmethionine" evidence="43 44">
    <location>
        <position position="1"/>
    </location>
</feature>
<feature type="modified residue" description="Phosphoserine" evidence="45">
    <location>
        <position position="185"/>
    </location>
</feature>
<feature type="modified residue" description="Phosphoserine; by CK2" evidence="37">
    <location>
        <position position="355"/>
    </location>
</feature>
<feature type="modified residue" description="Phosphoserine" evidence="46">
    <location>
        <position position="418"/>
    </location>
</feature>
<feature type="splice variant" id="VSP_042806" description="In isoform 3." evidence="33">
    <location>
        <begin position="1"/>
        <end position="73"/>
    </location>
</feature>
<feature type="splice variant" id="VSP_057352" description="In isoform 6." evidence="34">
    <original>T</original>
    <variation>TVRRGEATIRPPPCDDTK</variation>
    <location>
        <position position="68"/>
    </location>
</feature>
<feature type="splice variant" id="VSP_001744" description="In isoform 2." evidence="36">
    <location>
        <begin position="69"/>
        <end position="101"/>
    </location>
</feature>
<feature type="splice variant" id="VSP_042807" description="In isoform 5." evidence="35">
    <original>LETCMKSCGKRFHDEVGKFR</original>
    <variation>RRGEATIRPPPCDDTKGGQD</variation>
    <location>
        <begin position="70"/>
        <end position="89"/>
    </location>
</feature>
<feature type="splice variant" id="VSP_042808" description="In isoform 5." evidence="35">
    <location>
        <begin position="90"/>
        <end position="639"/>
    </location>
</feature>
<feature type="splice variant" id="VSP_042809" description="In isoform 4." evidence="35">
    <location>
        <begin position="277"/>
        <end position="363"/>
    </location>
</feature>
<feature type="sequence variant" id="VAR_036522" description="In a breast cancer sample; somatic mutation; dbSNP:rs765255006." evidence="27">
    <original>G</original>
    <variation>S</variation>
    <location>
        <position position="239"/>
    </location>
</feature>
<feature type="sequence variant" id="VAR_036523" description="In a breast cancer sample; somatic mutation." evidence="27">
    <original>P</original>
    <variation>A</variation>
    <location>
        <position position="484"/>
    </location>
</feature>
<feature type="mutagenesis site" description="Abolishes interaction with IGF2R." evidence="13">
    <original>N</original>
    <variation>A</variation>
    <location>
        <position position="92"/>
    </location>
</feature>
<feature type="mutagenesis site" description="Abolishes interaction with ARF1, UBC and TSG101." evidence="23">
    <original>L</original>
    <variation>A</variation>
    <location>
        <position position="182"/>
    </location>
</feature>
<feature type="mutagenesis site" description="Abolishes interaction with ARF1 and RABEP1." evidence="23">
    <original>N</original>
    <variation>A</variation>
    <location>
        <position position="194"/>
    </location>
</feature>
<feature type="mutagenesis site" description="Abolishes interaction with ARF1, UBC and TSG101." evidence="23">
    <original>I</original>
    <variation>A</variation>
    <location>
        <position position="197"/>
    </location>
</feature>
<feature type="mutagenesis site" description="Abolishes interaction with ARF1." evidence="23">
    <original>K</original>
    <variation>A</variation>
    <location>
        <position position="198"/>
    </location>
</feature>
<feature type="mutagenesis site" description="Abolishes interaction with ARF1." evidence="23">
    <original>M</original>
    <variation>A</variation>
    <location>
        <position position="200"/>
    </location>
</feature>
<feature type="mutagenesis site" description="Abolishes interaction with ARF1." evidence="23">
    <original>D</original>
    <variation>A</variation>
    <location>
        <position position="204"/>
    </location>
</feature>
<feature type="mutagenesis site" description="Abolishes interaction with RABEP1." evidence="23">
    <original>M</original>
    <variation>K</variation>
    <location>
        <position position="259"/>
    </location>
</feature>
<feature type="mutagenesis site" description="No effect on interaction with RABEP1." evidence="23">
    <original>R</original>
    <variation>A</variation>
    <location>
        <position position="260"/>
    </location>
</feature>
<feature type="mutagenesis site" description="Abolishes interaction with RABEP1 and UBC." evidence="23">
    <original>R</original>
    <variation>E</variation>
    <location>
        <position position="260"/>
    </location>
</feature>
<feature type="mutagenesis site" description="Abolishes interaction with RABEP1." evidence="23">
    <original>F</original>
    <variation>A</variation>
    <location>
        <position position="264"/>
    </location>
</feature>
<feature type="mutagenesis site" description="Abolishes interaction with RABEP1 and UBC." evidence="23">
    <original>A</original>
    <variation>D</variation>
    <location>
        <position position="267"/>
    </location>
</feature>
<feature type="mutagenesis site" description="Abolishes interaction with RABEP1, UBC and TSG101." evidence="23">
    <original>L</original>
    <variation>A</variation>
    <location>
        <position position="277"/>
    </location>
</feature>
<feature type="mutagenesis site" description="Abolishes interaction with RABEP1." evidence="23">
    <original>L</original>
    <variation>A</variation>
    <location>
        <position position="281"/>
    </location>
</feature>
<feature type="mutagenesis site" description="Abolishes interaction with RABEP1." evidence="23">
    <original>N</original>
    <variation>A</variation>
    <location>
        <position position="284"/>
    </location>
</feature>
<feature type="mutagenesis site" description="Abolishes interaction with RABEP1." evidence="23">
    <original>N</original>
    <variation>S</variation>
    <location>
        <position position="284"/>
    </location>
</feature>
<feature type="mutagenesis site" description="Increased interaction with IGF2R. Reduced phosphorylation. No effect on the interaction with SORL1." evidence="13 29">
    <original>S</original>
    <variation>A</variation>
    <location>
        <position position="355"/>
    </location>
</feature>
<feature type="mutagenesis site" description="Abolishes interaction with IGF2R. No effect on the interaction with SORL1." evidence="13 29">
    <original>S</original>
    <variation>D</variation>
    <location>
        <position position="355"/>
    </location>
</feature>
<feature type="mutagenesis site" description="Partial loss of clathrin-binding." evidence="8">
    <original>LLDDE</original>
    <variation>AADAA</variation>
    <location>
        <begin position="356"/>
        <end position="360"/>
    </location>
</feature>
<feature type="mutagenesis site" description="Increased interaction with IGF2R." evidence="13">
    <original>D</original>
    <variation>A</variation>
    <location>
        <position position="358"/>
    </location>
</feature>
<feature type="mutagenesis site" description="Increased interaction with IGF2R." evidence="13">
    <original>LM</original>
    <variation>AA</variation>
    <location>
        <begin position="361"/>
        <end position="362"/>
    </location>
</feature>
<feature type="mutagenesis site" description="Abolishes interaction with CCDC91." evidence="17">
    <original>A</original>
    <variation>D</variation>
    <location>
        <position position="563"/>
    </location>
</feature>
<feature type="mutagenesis site" description="Abolishes interaction with CCDC91." evidence="17">
    <original>V</original>
    <variation>D</variation>
    <location>
        <position position="564"/>
    </location>
</feature>
<feature type="mutagenesis site" description="Abolishes interaction with CCDC91." evidence="17">
    <original>V</original>
    <variation>E</variation>
    <location>
        <position position="570"/>
    </location>
</feature>
<feature type="mutagenesis site" description="Abolishes interaction with CCDC91." evidence="17">
    <original>L</original>
    <variation>E</variation>
    <location>
        <position position="572"/>
    </location>
</feature>
<feature type="helix" evidence="50">
    <location>
        <begin position="3"/>
        <end position="5"/>
    </location>
</feature>
<feature type="helix" evidence="53">
    <location>
        <begin position="10"/>
        <end position="17"/>
    </location>
</feature>
<feature type="helix" evidence="53">
    <location>
        <begin position="27"/>
        <end position="36"/>
    </location>
</feature>
<feature type="helix" evidence="53">
    <location>
        <begin position="37"/>
        <end position="39"/>
    </location>
</feature>
<feature type="strand" evidence="53">
    <location>
        <begin position="40"/>
        <end position="42"/>
    </location>
</feature>
<feature type="helix" evidence="53">
    <location>
        <begin position="43"/>
        <end position="55"/>
    </location>
</feature>
<feature type="helix" evidence="53">
    <location>
        <begin position="60"/>
        <end position="76"/>
    </location>
</feature>
<feature type="helix" evidence="53">
    <location>
        <begin position="79"/>
        <end position="85"/>
    </location>
</feature>
<feature type="helix" evidence="53">
    <location>
        <begin position="88"/>
        <end position="98"/>
    </location>
</feature>
<feature type="turn" evidence="53">
    <location>
        <begin position="100"/>
        <end position="103"/>
    </location>
</feature>
<feature type="helix" evidence="53">
    <location>
        <begin position="104"/>
        <end position="106"/>
    </location>
</feature>
<feature type="helix" evidence="53">
    <location>
        <begin position="109"/>
        <end position="125"/>
    </location>
</feature>
<feature type="helix" evidence="53">
    <location>
        <begin position="130"/>
        <end position="141"/>
    </location>
</feature>
<feature type="helix" evidence="47">
    <location>
        <begin position="172"/>
        <end position="182"/>
    </location>
</feature>
<feature type="helix" evidence="47">
    <location>
        <begin position="187"/>
        <end position="205"/>
    </location>
</feature>
<feature type="helix" evidence="51">
    <location>
        <begin position="212"/>
        <end position="233"/>
    </location>
</feature>
<feature type="turn" evidence="49">
    <location>
        <begin position="235"/>
        <end position="238"/>
    </location>
</feature>
<feature type="helix" evidence="49">
    <location>
        <begin position="243"/>
        <end position="267"/>
    </location>
</feature>
<feature type="helix" evidence="49">
    <location>
        <begin position="274"/>
        <end position="298"/>
    </location>
</feature>
<feature type="helix" evidence="48">
    <location>
        <begin position="494"/>
        <end position="497"/>
    </location>
</feature>
<feature type="helix" evidence="48">
    <location>
        <begin position="504"/>
        <end position="506"/>
    </location>
</feature>
<feature type="strand" evidence="48">
    <location>
        <begin position="515"/>
        <end position="520"/>
    </location>
</feature>
<feature type="strand" evidence="48">
    <location>
        <begin position="523"/>
        <end position="531"/>
    </location>
</feature>
<feature type="strand" evidence="52">
    <location>
        <begin position="533"/>
        <end position="535"/>
    </location>
</feature>
<feature type="strand" evidence="48">
    <location>
        <begin position="540"/>
        <end position="549"/>
    </location>
</feature>
<feature type="strand" evidence="48">
    <location>
        <begin position="555"/>
        <end position="563"/>
    </location>
</feature>
<feature type="strand" evidence="48">
    <location>
        <begin position="568"/>
        <end position="572"/>
    </location>
</feature>
<feature type="strand" evidence="48">
    <location>
        <begin position="592"/>
        <end position="599"/>
    </location>
</feature>
<feature type="strand" evidence="48">
    <location>
        <begin position="608"/>
        <end position="616"/>
    </location>
</feature>
<feature type="strand" evidence="48">
    <location>
        <begin position="619"/>
        <end position="627"/>
    </location>
</feature>
<feature type="turn" evidence="48">
    <location>
        <begin position="633"/>
        <end position="635"/>
    </location>
</feature>
<feature type="helix" evidence="48">
    <location>
        <begin position="636"/>
        <end position="638"/>
    </location>
</feature>
<protein>
    <recommendedName>
        <fullName>ADP-ribosylation factor-binding protein GGA1</fullName>
    </recommendedName>
    <alternativeName>
        <fullName>Gamma-adaptin-related protein 1</fullName>
    </alternativeName>
    <alternativeName>
        <fullName>Golgi-localized, gamma ear-containing, ARF-binding protein 1</fullName>
    </alternativeName>
</protein>
<proteinExistence type="evidence at protein level"/>